<feature type="signal peptide" evidence="1">
    <location>
        <begin position="1"/>
        <end position="28"/>
    </location>
</feature>
<feature type="chain" id="PRO_5004171239" description="Cell adhesion molecule Dscam1" evidence="1">
    <location>
        <begin position="29"/>
        <end position="2016"/>
    </location>
</feature>
<feature type="topological domain" description="Extracellular" evidence="19">
    <location>
        <begin position="29"/>
        <end position="1618"/>
    </location>
</feature>
<feature type="transmembrane region" description="Helical" evidence="1">
    <location>
        <begin position="1619"/>
        <end position="1639"/>
    </location>
</feature>
<feature type="topological domain" description="Cytoplasmic" evidence="19">
    <location>
        <begin position="1640"/>
        <end position="2016"/>
    </location>
</feature>
<feature type="domain" description="Ig-like C2-type 1" evidence="2">
    <location>
        <begin position="39"/>
        <end position="134"/>
    </location>
</feature>
<feature type="domain" description="Ig-like C2-type 2" evidence="2">
    <location>
        <begin position="138"/>
        <end position="230"/>
    </location>
</feature>
<feature type="domain" description="Ig-like C2-type 3" evidence="2">
    <location>
        <begin position="247"/>
        <end position="338"/>
    </location>
</feature>
<feature type="domain" description="Ig-like C2-type 4" evidence="2">
    <location>
        <begin position="342"/>
        <end position="421"/>
    </location>
</feature>
<feature type="domain" description="Ig-like C2-type 5" evidence="2">
    <location>
        <begin position="428"/>
        <end position="522"/>
    </location>
</feature>
<feature type="domain" description="Ig-like C2-type 6" evidence="2">
    <location>
        <begin position="527"/>
        <end position="613"/>
    </location>
</feature>
<feature type="domain" description="Ig-like C2-type 7" evidence="2">
    <location>
        <begin position="618"/>
        <end position="712"/>
    </location>
</feature>
<feature type="domain" description="Ig-like C2-type 8" evidence="2">
    <location>
        <begin position="715"/>
        <end position="807"/>
    </location>
</feature>
<feature type="domain" description="Ig-like C2-type 9" evidence="2">
    <location>
        <begin position="812"/>
        <end position="904"/>
    </location>
</feature>
<feature type="domain" description="Fibronectin type-III 1" evidence="3">
    <location>
        <begin position="913"/>
        <end position="1007"/>
    </location>
</feature>
<feature type="domain" description="Fibronectin type-III 2" evidence="3">
    <location>
        <begin position="1012"/>
        <end position="1116"/>
    </location>
</feature>
<feature type="domain" description="Fibronectin type-III 3" evidence="3">
    <location>
        <begin position="1117"/>
        <end position="1213"/>
    </location>
</feature>
<feature type="domain" description="Fibronectin type-III 4" evidence="3">
    <location>
        <begin position="1217"/>
        <end position="1310"/>
    </location>
</feature>
<feature type="domain" description="Ig-like C2-type 10" evidence="2">
    <location>
        <begin position="1312"/>
        <end position="1394"/>
    </location>
</feature>
<feature type="domain" description="Fibronectin type-III 5" evidence="3">
    <location>
        <begin position="1402"/>
        <end position="1495"/>
    </location>
</feature>
<feature type="domain" description="Fibronectin type-III 6" evidence="3">
    <location>
        <begin position="1499"/>
        <end position="1594"/>
    </location>
</feature>
<feature type="region of interest" description="Disordered" evidence="5">
    <location>
        <begin position="1688"/>
        <end position="1719"/>
    </location>
</feature>
<feature type="region of interest" description="Disordered" evidence="5">
    <location>
        <begin position="1787"/>
        <end position="1846"/>
    </location>
</feature>
<feature type="region of interest" description="Disordered" evidence="5">
    <location>
        <begin position="1862"/>
        <end position="2016"/>
    </location>
</feature>
<feature type="short sequence motif" description="PXXP motif 1; SH3-binding" evidence="6">
    <location>
        <begin position="1685"/>
        <end position="1688"/>
    </location>
</feature>
<feature type="short sequence motif" description="PXXP motif 2; SH3-binding" evidence="6">
    <location>
        <begin position="1727"/>
        <end position="1730"/>
    </location>
</feature>
<feature type="short sequence motif" description="YXXP motif 1; potential SH2-binding" evidence="18">
    <location>
        <begin position="1842"/>
        <end position="1845"/>
    </location>
</feature>
<feature type="short sequence motif" description="YXXP motif 2; potential SH2-binding" evidence="18">
    <location>
        <begin position="1875"/>
        <end position="1878"/>
    </location>
</feature>
<feature type="short sequence motif" description="Polyproline tract (probable SH3-binding)" evidence="6">
    <location>
        <begin position="1925"/>
        <end position="1932"/>
    </location>
</feature>
<feature type="compositionally biased region" description="Polar residues" evidence="5">
    <location>
        <begin position="1826"/>
        <end position="1836"/>
    </location>
</feature>
<feature type="compositionally biased region" description="Low complexity" evidence="5">
    <location>
        <begin position="1897"/>
        <end position="1918"/>
    </location>
</feature>
<feature type="compositionally biased region" description="Basic and acidic residues" evidence="5">
    <location>
        <begin position="1944"/>
        <end position="1962"/>
    </location>
</feature>
<feature type="compositionally biased region" description="Basic and acidic residues" evidence="5">
    <location>
        <begin position="1974"/>
        <end position="1993"/>
    </location>
</feature>
<feature type="compositionally biased region" description="Polar residues" evidence="5">
    <location>
        <begin position="1994"/>
        <end position="2004"/>
    </location>
</feature>
<feature type="glycosylation site" description="N-linked (GlcNAc...) asparagine" evidence="4 14 16 17 23 24 26 38">
    <location>
        <position position="53"/>
    </location>
</feature>
<feature type="glycosylation site" description="N-linked (GlcNAc...) asparagine" evidence="4">
    <location>
        <position position="325"/>
    </location>
</feature>
<feature type="glycosylation site" description="N-linked (GlcNAc...) asparagine" evidence="4 16 26">
    <location>
        <position position="492"/>
    </location>
</feature>
<feature type="glycosylation site" description="N-linked (GlcNAc...) asparagine" evidence="4 16 26">
    <location>
        <position position="577"/>
    </location>
</feature>
<feature type="glycosylation site" description="N-linked (GlcNAc...) asparagine" evidence="4">
    <location>
        <position position="820"/>
    </location>
</feature>
<feature type="glycosylation site" description="N-linked (GlcNAc...) asparagine" evidence="4">
    <location>
        <position position="1022"/>
    </location>
</feature>
<feature type="glycosylation site" description="N-linked (GlcNAc...) asparagine" evidence="4">
    <location>
        <position position="1055"/>
    </location>
</feature>
<feature type="glycosylation site" description="N-linked (GlcNAc...) asparagine" evidence="4">
    <location>
        <position position="1186"/>
    </location>
</feature>
<feature type="disulfide bond" evidence="2 14 16 17 23 24 25 26 29 30 31 32 33 34 35 36 37 38">
    <location>
        <begin position="61"/>
        <end position="117"/>
    </location>
</feature>
<feature type="disulfide bond" evidence="2 14 16 17 23 24 26 30">
    <location>
        <begin position="160"/>
        <end position="217"/>
    </location>
</feature>
<feature type="disulfide bond" evidence="2">
    <location>
        <begin position="269"/>
        <end position="322"/>
    </location>
</feature>
<feature type="disulfide bond" evidence="2 14 16 17 23 25 26 29 30 31 32 33 34 35 36 37 38">
    <location>
        <begin position="364"/>
        <end position="405"/>
    </location>
</feature>
<feature type="disulfide bond" evidence="2 16 26">
    <location>
        <begin position="450"/>
        <end position="506"/>
    </location>
</feature>
<feature type="disulfide bond" evidence="2 16 26">
    <location>
        <begin position="547"/>
        <end position="596"/>
    </location>
</feature>
<feature type="disulfide bond" evidence="2 17 28">
    <location>
        <begin position="640"/>
        <end position="694"/>
    </location>
</feature>
<feature type="disulfide bond" evidence="2">
    <location>
        <begin position="736"/>
        <end position="790"/>
    </location>
</feature>
<feature type="disulfide bond" evidence="2">
    <location>
        <begin position="833"/>
        <end position="890"/>
    </location>
</feature>
<feature type="disulfide bond" evidence="2">
    <location>
        <begin position="1334"/>
        <end position="1382"/>
    </location>
</feature>
<feature type="splice variant" id="VSP_062079" description="In isoform AP." evidence="19">
    <original>AQYYEADVNKEHVIRGNSAVIKCL</original>
    <variation>SQFYITEAENEYVIKGNAAVVKCK</variation>
    <location>
        <begin position="138"/>
        <end position="161"/>
    </location>
</feature>
<feature type="splice variant" id="VSP_062080" description="In isoform AG, isoform AF and isoform AE." evidence="19">
    <original>AQYYEADVNKEH</original>
    <variation>NQFYGADILMEY</variation>
    <location>
        <begin position="138"/>
        <end position="149"/>
    </location>
</feature>
<feature type="splice variant" id="VSP_062081" description="In isoform AU." evidence="19">
    <original>AQYYEADVNKEH</original>
    <variation>IQSYESEADNEY</variation>
    <location>
        <begin position="138"/>
        <end position="149"/>
    </location>
</feature>
<feature type="splice variant" id="VSP_062082" description="In isoform BE, isoform AM and isoform AO." evidence="19">
    <original>AQYYEADVNKEH</original>
    <variation>NQFYEAEIMTEY</variation>
    <location>
        <begin position="138"/>
        <end position="149"/>
    </location>
</feature>
<feature type="splice variant" id="VSP_062083" description="In isoform O and isoform BQ." evidence="19">
    <original>AQYYEADVNKEH</original>
    <variation>SQHYEEDIHKAF</variation>
    <location>
        <begin position="138"/>
        <end position="149"/>
    </location>
</feature>
<feature type="splice variant" id="VSP_062084" description="In isoform Y." evidence="19">
    <original>AQYYEADVNKEH</original>
    <variation>QQFYESEVNNEY</variation>
    <location>
        <begin position="138"/>
        <end position="149"/>
    </location>
</feature>
<feature type="splice variant" id="VSP_062085" description="In isoform Y, isoform AG, isoform BE, isoform AM, isoform AO, isoform AF and isoform AE." evidence="19">
    <original>SAVIKCL</original>
    <variation>AAVLKCS</variation>
    <location>
        <begin position="155"/>
        <end position="161"/>
    </location>
</feature>
<feature type="splice variant" id="VSP_062086" description="In isoform AU." evidence="19">
    <original>AVIKCLIPSF</original>
    <variation>VVMKCEIPSY</variation>
    <location>
        <begin position="156"/>
        <end position="165"/>
    </location>
</feature>
<feature type="splice variant" id="VSP_062087" description="In isoform O and isoform BQ." evidence="19">
    <original>VIKCL</original>
    <variation>ILKCD</variation>
    <location>
        <begin position="157"/>
        <end position="161"/>
    </location>
</feature>
<feature type="splice variant" id="VSP_062088" description="In isoform AU." evidence="19">
    <original>EVVSWHTDEEENYFPGAEY</original>
    <variation>FVDLWLDSEGRNYYPNNAAET</variation>
    <location>
        <begin position="171"/>
        <end position="189"/>
    </location>
</feature>
<feature type="splice variant" id="VSP_062089" description="In isoform Y." evidence="19">
    <original>EVVSWHTDEEENYFPGAEY</original>
    <variation>QVVSWQDEEGQLYGSLGDQQGT</variation>
    <location>
        <begin position="171"/>
        <end position="189"/>
    </location>
</feature>
<feature type="splice variant" id="VSP_062090" description="In isoform AG, isoform AF and isoform AE." evidence="19">
    <original>EVVSWHTDEEENYFPGAE</original>
    <variation>RVESWIDEEGTELRPSEN</variation>
    <location>
        <begin position="171"/>
        <end position="188"/>
    </location>
</feature>
<feature type="splice variant" id="VSP_062091" description="In isoform AP." evidence="19">
    <original>EVVSWHTDEEENYFPGAE</original>
    <variation>QVEAWVDEEGMELWRNNATDA</variation>
    <location>
        <begin position="171"/>
        <end position="188"/>
    </location>
</feature>
<feature type="splice variant" id="VSP_062092" description="In isoform BE, isoform AM and isoform AO." evidence="19">
    <original>EVVSWHTDEEENYFPGAE</original>
    <variation>RVESWIDDEGNVLSFSDN</variation>
    <location>
        <begin position="171"/>
        <end position="188"/>
    </location>
</feature>
<feature type="splice variant" id="VSP_062093" description="In isoform O and isoform BQ." evidence="19">
    <original>EVVSWHTDEEENYFPGA</original>
    <variation>NVISWHSDEKENFYPGT</variation>
    <location>
        <begin position="171"/>
        <end position="187"/>
    </location>
</feature>
<feature type="splice variant" id="VSP_062094" description="In isoform AO." evidence="19">
    <original>VSSSPPKINALTYKPNIVESMASTAILCPAQGYPAPSF</original>
    <variation>IGARAPTFSTDSNSFSYTRSVGQSFALLCQAQAYPVPIM</variation>
    <location>
        <begin position="242"/>
        <end position="279"/>
    </location>
</feature>
<feature type="splice variant" id="VSP_062095" description="In isoform O." evidence="19">
    <original>VSSSPPKINALTYKPNIVESMASTAILCPAQGYPAPS</original>
    <variation>IGSKAPSVPTGVMVFQQQVPLLSTFAMLCQAQAFPVPV</variation>
    <location>
        <begin position="242"/>
        <end position="278"/>
    </location>
</feature>
<feature type="splice variant" id="VSP_062096" description="In isoform AE." evidence="19">
    <original>VSSSPPKINALTYKPNIVESMASTAI</original>
    <variation>ISSAVPKVVSLAKFDMKTYSGSSTMAL</variation>
    <location>
        <begin position="242"/>
        <end position="267"/>
    </location>
</feature>
<feature type="splice variant" id="VSP_062097" description="In isoform AF." evidence="19">
    <original>VSSSPPKINALTYKPNIVESMASTAI</original>
    <variation>ISSSAPRTPALVQKPLELMVAHTISL</variation>
    <location>
        <begin position="242"/>
        <end position="267"/>
    </location>
</feature>
<feature type="splice variant" id="VSP_062098" description="In isoform AU." evidence="19">
    <original>VSSSPPKINALTYKPNIVESMASTAI</original>
    <variation>ISAKAPVLAVDTKWSGIERHRDMDIVL</variation>
    <location>
        <begin position="242"/>
        <end position="267"/>
    </location>
</feature>
<feature type="splice variant" id="VSP_062099" description="In isoform AG." evidence="19">
    <original>SSSPPKINALTYKPNIVESMASTAILCPAQGYPAPSF</original>
    <variation>GAKAPTFSLEYKLIEVQKSKGTAFALLCQAQAFPVPII</variation>
    <location>
        <begin position="243"/>
        <end position="279"/>
    </location>
</feature>
<feature type="splice variant" id="VSP_062100" description="In isoform BQ." evidence="19">
    <original>SSSPPKINALTYKPNIVESMASTAILCPAQGYPAPSF</original>
    <variation>GSKAPTFATASKISSLLGSSSSDIVLLCQAQAFPVPYT</variation>
    <location>
        <begin position="243"/>
        <end position="279"/>
    </location>
</feature>
<feature type="splice variant" id="VSP_062101" description="In isoform Y." evidence="19">
    <original>SSSPPKINALTYKPNIVESMASTAILCPAQGYPAPSF</original>
    <variation>GAKAPTFSGESKSFTFVKEISTSFALLCQAQAFPVPII</variation>
    <location>
        <begin position="243"/>
        <end position="279"/>
    </location>
</feature>
<feature type="splice variant" id="VSP_062102" description="In isoform AP." evidence="19">
    <original>SSSPPKINALTYKPNIVESMASTAILCPAQGYPAPS</original>
    <variation>GSVSPQLSGNGNQEHITLTRVPKMGSVTLMCPAQAYPVPF</variation>
    <location>
        <begin position="243"/>
        <end position="278"/>
    </location>
</feature>
<feature type="splice variant" id="VSP_062103" description="In isoform BE." evidence="19">
    <original>SSSPPKINALTYKPNIVESMASTAILCPAQGYPA</original>
    <variation>GSVRPKVNPQDKHQFIDVELASSYSLLCMAQSYPT</variation>
    <location>
        <begin position="243"/>
        <end position="276"/>
    </location>
</feature>
<feature type="splice variant" id="VSP_062104" description="In isoform AM." evidence="19">
    <original>SSSPPKINALTYKPNIVESMASTAILCP</original>
    <variation>GSVAPKVDMQDKFGVNIRQANNSLNLLCK</variation>
    <location>
        <begin position="243"/>
        <end position="270"/>
    </location>
</feature>
<feature type="splice variant" id="VSP_062105" description="In isoform BF." evidence="19">
    <original>SSSPPKINALTYKPNIVESMASTAI</original>
    <variation>GSVKPKINVQDKLQTREISQGIGIAL</variation>
    <location>
        <begin position="243"/>
        <end position="267"/>
    </location>
</feature>
<feature type="splice variant" id="VSP_062106" description="In isoform G." evidence="19">
    <original>SSSPPKINALTYKPNIVESMASTAI</original>
    <variation>GSVGPKLTSGDDSRTVRIRQEDSVTL</variation>
    <location>
        <begin position="243"/>
        <end position="267"/>
    </location>
</feature>
<feature type="splice variant" id="VSP_062107" description="In isoform AU." evidence="19">
    <original>GYPAPSF</original>
    <variation>AYPVPIS</variation>
    <location>
        <begin position="273"/>
        <end position="279"/>
    </location>
</feature>
<feature type="splice variant" id="VSP_062108" description="In isoform BF." evidence="19">
    <original>GYPAPSF</original>
    <variation>SYPIPAH</variation>
    <location>
        <begin position="273"/>
        <end position="279"/>
    </location>
</feature>
<feature type="splice variant" id="VSP_062109" description="In isoform G." evidence="19">
    <original>GYPAPSF</original>
    <variation>AYPVPVY</variation>
    <location>
        <begin position="273"/>
        <end position="279"/>
    </location>
</feature>
<feature type="splice variant" id="VSP_062110" description="In isoform AF." evidence="19">
    <original>Y</original>
    <variation>F</variation>
    <location>
        <position position="274"/>
    </location>
</feature>
<feature type="splice variant" id="VSP_062111" description="In isoform AE." evidence="19">
    <original>APS</original>
    <variation>VPV</variation>
    <location>
        <begin position="276"/>
        <end position="278"/>
    </location>
</feature>
<feature type="splice variant" id="VSP_062112" description="In isoform AM." evidence="19">
    <original>APS</original>
    <variation>MPA</variation>
    <location>
        <begin position="276"/>
        <end position="278"/>
    </location>
</feature>
<feature type="splice variant" id="VSP_062113" description="In isoform AG." evidence="19">
    <original>PPQVLPFSFGESAADVGDIASANCVVPKGDLPLEIRWSLNSAPIVNGENGFTLVRLNKRTSLLNIDSLNAFHRGVYKCIATNPAGTSEYVAELQ</original>
    <variation>APKIAPFDFGDEPSNFGESASVQCLVTSGDFPVSFAWLFNGREINENVYDVSMVKLGKKISALSIDIVRDHHAGNYTCVAVNRATSVNFTAELV</variation>
    <location>
        <begin position="617"/>
        <end position="710"/>
    </location>
</feature>
<feature type="splice variant" id="VSP_062114" description="In isoform O and isoform BE." evidence="19">
    <original>PPQVLPFSFGESAADVGDIASANCVVPK</original>
    <variation>LPRIIPFAFEEGPAQVGQYLTLHCSVPG</variation>
    <location>
        <begin position="617"/>
        <end position="644"/>
    </location>
</feature>
<feature type="splice variant" id="VSP_062115" description="In isoform BF and isoform AU." evidence="19">
    <original>PPQVLPFSFGESAADVGDIASANCVVP</original>
    <variation>LPQVVPFDFGEESINELDMVSASCTVN</variation>
    <location>
        <begin position="617"/>
        <end position="643"/>
    </location>
</feature>
<feature type="splice variant" id="VSP_062116" description="In isoform AF." evidence="19">
    <original>PPQVL</original>
    <variation>APQIS</variation>
    <location>
        <begin position="617"/>
        <end position="621"/>
    </location>
</feature>
<feature type="splice variant" id="VSP_062117" description="In isoform AE." evidence="19">
    <original>QVLPFSFGESAADVGDIASANCVVPKGDLPLEIRWSLNSAPIVNGENGFTLVRLNKRTSLLNIDSLNAFHRGVYKCIATNPAGTSEYVAELQ</original>
    <variation>KIAHFDFGDHAVNFEESVSVNCLIYLGDLPMDITWLFNGAHINAYTGVSIVKGGKKASILTIDSVHAGHAGNYTCKARNDADSAEYSAELI</variation>
    <location>
        <begin position="619"/>
        <end position="710"/>
    </location>
</feature>
<feature type="splice variant" id="VSP_062118" description="In isoform AP." evidence="19">
    <original>QVLPFSFGESAADVGDIASANCVVPKGDLPLEIRWSLNSAPIVNGENGFTLVRLNKRTSLLNIDSLNAFHRGVYKCIATNPAGTSEYVAELQ</original>
    <variation>KITPFDFGAEPTNVEDSVSVTCLISSGDLPIDIEWFFNDYGISSYSGINVVKGGKRNSMLSIDNVQARHAGKYSCRAKNYAAAVNYSTELI</variation>
    <location>
        <begin position="619"/>
        <end position="710"/>
    </location>
</feature>
<feature type="splice variant" id="VSP_062119" description="In isoform G." evidence="19">
    <original>QVL</original>
    <variation>SIA</variation>
    <location>
        <begin position="619"/>
        <end position="621"/>
    </location>
</feature>
<feature type="splice variant" id="VSP_062120" description="In isoform Y and isoform AO." evidence="19">
    <original>VLPFSFGESAADVGDIASANCV</original>
    <variation>IQAFDFGSEAANTGEMAGGFCM</variation>
    <location>
        <begin position="620"/>
        <end position="641"/>
    </location>
</feature>
<feature type="splice variant" id="VSP_062121" description="In isoform BQ." evidence="19">
    <original>LPFSFGESAADVGDIASANCVVPKGDLPLEIRWSLNSAPIVNGENGFTLVRLNKRTSLLNIDSLNAFHRGVYKCIATNPAGTSEYVAELQ</original>
    <variation>VPFDFGEETINMNDMVSATCTVNKGDTPLELYWTTAPDPTTGVGRLMSNDGILITKTTQRISMLSIESVHARHRANYTCVARNAAGVIYHTAELR</variation>
    <location>
        <begin position="621"/>
        <end position="710"/>
    </location>
</feature>
<feature type="splice variant" id="VSP_062122" description="In isoform G." evidence="19">
    <original>ESAADVGDIASANCVVPKGDLPLEIRWSLNSAPIVNGENGFTLVRLNKRTSLLNIDSLNAFHRGVYKCIATNPAGTSEYVAELQ</original>
    <variation>DDPVNTGENAGVQCMVQKGDVPITIKWTLNSRPIINGEEGITILKLSPKTSVLNIAAVEQDHRGVFKCIAENKAGSSFTTSELK</variation>
    <location>
        <begin position="627"/>
        <end position="710"/>
    </location>
</feature>
<feature type="splice variant" id="VSP_062123" description="In isoform AF." evidence="19">
    <original>ESAADVGDIASA</original>
    <variation>DEPLNRGEVASV</variation>
    <location>
        <begin position="627"/>
        <end position="638"/>
    </location>
</feature>
<feature type="splice variant" id="VSP_062124" description="In isoform BF and isoform AU." evidence="19">
    <original>LEIRWSLNSAPIVNGENGFTLVRLNKRTSLLNIDSLNAFHRGVYKCIATNPAGTSEYVAELQ</original>
    <variation>VDIYWTKNGGRVYTNDGLIVTRNSQRLSVLSIESVRARHAGNYSCVATNNAGAITQSAMLA</variation>
    <location>
        <begin position="649"/>
        <end position="710"/>
    </location>
</feature>
<feature type="splice variant" id="VSP_062125" description="In isoform Y and isoform AO." evidence="19">
    <original>L</original>
    <variation>M</variation>
    <location>
        <position position="649"/>
    </location>
</feature>
<feature type="splice variant" id="VSP_062126" description="In isoform O and isoform BE." evidence="19">
    <original>EIRWSLNSAPIVNGENGFTLVRLNKRTSLLNIDSLNAFHRGVYKCIATNPAGTSEYVAELQVN</original>
    <variation>NIDWTLDGQAISEDLGITTSRVGRRGSVLTIEAVEASHAGNFTCHARNLAGHQQFTTPLNVY</variation>
    <location>
        <begin position="650"/>
        <end position="712"/>
    </location>
</feature>
<feature type="splice variant" id="VSP_062127" description="In isoform AF." evidence="19">
    <original>EIRWSLNSAP</original>
    <variation>DIYWTLNSAL</variation>
    <location>
        <begin position="650"/>
        <end position="659"/>
    </location>
</feature>
<feature type="splice variant" id="VSP_062128" description="In isoform Y and isoform AO." evidence="19">
    <original>S</original>
    <variation>T</variation>
    <location>
        <position position="654"/>
    </location>
</feature>
<feature type="splice variant" id="VSP_062129" description="In isoform Y and isoform AO." evidence="19">
    <original>VNGENGFTLVRLNKRTSLLNIDSLNAFHRGVYKCIATNPAGTSEYVAELQ</original>
    <variation>ITGEHGFSLSRLNPRTSSLSIDSLEARHRGLYRCIASNKAGSAEYSAELH</variation>
    <location>
        <begin position="661"/>
        <end position="710"/>
    </location>
</feature>
<feature type="splice variant" id="VSP_062130" description="In isoform AF." evidence="19">
    <original>N</original>
    <variation>M</variation>
    <location>
        <position position="665"/>
    </location>
</feature>
<feature type="splice variant" id="VSP_062131" description="In isoform AF." evidence="19">
    <original>LLNIDSLNAFHRGV</original>
    <variation>SLNVDSLEAVHRGS</variation>
    <location>
        <begin position="678"/>
        <end position="691"/>
    </location>
</feature>
<feature type="splice variant" id="VSP_062132" description="In isoform AF." evidence="19">
    <original>TNPAGTSEYVAELQ</original>
    <variation>NNSAGYAEYVSTLD</variation>
    <location>
        <begin position="697"/>
        <end position="710"/>
    </location>
</feature>
<feature type="splice variant" id="VSP_062133" description="In isoform G, isoform BF, isoform O, isoform Y, isoform AG, isoform BE, isoform AO, isoform AF and isoform BQ." evidence="19">
    <original>SRDLPELSAEDTIRIILSNLNLVVPVVAALLVIIIAIIVICILRSKGNHHKD</original>
    <variation>LDDGSGHGNVHTRIRLPAWMPEWLDLNFMVPLIATVVVVAVGICVVCVALSRRRADDMRGGQKDVYY</variation>
    <location>
        <begin position="1598"/>
        <end position="1649"/>
    </location>
</feature>
<feature type="mutagenesis site" description="In DscamR496W; loss of function probably due to disruption of the intramolecular binding interface between Ig-like domains 5 and 6; dorsal lobe nerve tract does not form and the medial lobe fails to extend to the midline." evidence="16">
    <original>R</original>
    <variation>W</variation>
    <location>
        <position position="530"/>
    </location>
</feature>
<feature type="sequence conflict" description="In Ref. 1; AAF71926." evidence="19" ref="1">
    <original>A</original>
    <variation>T</variation>
    <location>
        <position position="251"/>
    </location>
</feature>
<feature type="sequence conflict" description="In Ref. 1; AAF71926." evidence="19" ref="1">
    <original>P</original>
    <variation>S</variation>
    <location>
        <position position="388"/>
    </location>
</feature>
<feature type="sequence conflict" description="In Ref. 1; AAF71926." evidence="19" ref="1">
    <original>Q</original>
    <variation>R</variation>
    <location>
        <position position="411"/>
    </location>
</feature>
<feature type="sequence conflict" description="In Ref. 1; AAF71926." evidence="19" ref="1">
    <original>H</original>
    <variation>L</variation>
    <location>
        <position position="1804"/>
    </location>
</feature>
<feature type="strand" evidence="40">
    <location>
        <begin position="37"/>
        <end position="43"/>
    </location>
</feature>
<feature type="strand" evidence="40">
    <location>
        <begin position="47"/>
        <end position="52"/>
    </location>
</feature>
<feature type="turn" evidence="40">
    <location>
        <begin position="53"/>
        <end position="55"/>
    </location>
</feature>
<feature type="strand" evidence="40">
    <location>
        <begin position="57"/>
        <end position="59"/>
    </location>
</feature>
<feature type="strand" evidence="40">
    <location>
        <begin position="62"/>
        <end position="67"/>
    </location>
</feature>
<feature type="strand" evidence="40">
    <location>
        <begin position="70"/>
        <end position="75"/>
    </location>
</feature>
<feature type="turn" evidence="40">
    <location>
        <begin position="85"/>
        <end position="87"/>
    </location>
</feature>
<feature type="strand" evidence="40">
    <location>
        <begin position="88"/>
        <end position="91"/>
    </location>
</feature>
<feature type="turn" evidence="40">
    <location>
        <begin position="92"/>
        <end position="94"/>
    </location>
</feature>
<feature type="strand" evidence="40">
    <location>
        <begin position="95"/>
        <end position="98"/>
    </location>
</feature>
<feature type="helix" evidence="40">
    <location>
        <begin position="103"/>
        <end position="105"/>
    </location>
</feature>
<feature type="helix" evidence="40">
    <location>
        <begin position="108"/>
        <end position="111"/>
    </location>
</feature>
<feature type="strand" evidence="40">
    <location>
        <begin position="112"/>
        <end position="120"/>
    </location>
</feature>
<feature type="strand" evidence="40">
    <location>
        <begin position="125"/>
        <end position="127"/>
    </location>
</feature>
<feature type="strand" evidence="40">
    <location>
        <begin position="131"/>
        <end position="136"/>
    </location>
</feature>
<feature type="strand" evidence="40">
    <location>
        <begin position="148"/>
        <end position="151"/>
    </location>
</feature>
<feature type="strand" evidence="40">
    <location>
        <begin position="156"/>
        <end position="158"/>
    </location>
</feature>
<feature type="helix" evidence="40">
    <location>
        <begin position="164"/>
        <end position="166"/>
    </location>
</feature>
<feature type="turn" evidence="40">
    <location>
        <begin position="167"/>
        <end position="169"/>
    </location>
</feature>
<feature type="strand" evidence="40">
    <location>
        <begin position="170"/>
        <end position="175"/>
    </location>
</feature>
<feature type="turn" evidence="41">
    <location>
        <begin position="178"/>
        <end position="180"/>
    </location>
</feature>
<feature type="strand" evidence="42">
    <location>
        <begin position="182"/>
        <end position="184"/>
    </location>
</feature>
<feature type="strand" evidence="43">
    <location>
        <begin position="185"/>
        <end position="187"/>
    </location>
</feature>
<feature type="strand" evidence="40">
    <location>
        <begin position="191"/>
        <end position="195"/>
    </location>
</feature>
<feature type="strand" evidence="40">
    <location>
        <begin position="201"/>
        <end position="203"/>
    </location>
</feature>
<feature type="helix" evidence="40">
    <location>
        <begin position="208"/>
        <end position="211"/>
    </location>
</feature>
<feature type="strand" evidence="40">
    <location>
        <begin position="214"/>
        <end position="221"/>
    </location>
</feature>
<feature type="turn" evidence="40">
    <location>
        <begin position="222"/>
        <end position="224"/>
    </location>
</feature>
<feature type="strand" evidence="40">
    <location>
        <begin position="227"/>
        <end position="229"/>
    </location>
</feature>
<feature type="strand" evidence="40">
    <location>
        <begin position="234"/>
        <end position="239"/>
    </location>
</feature>
<feature type="strand" evidence="40">
    <location>
        <begin position="245"/>
        <end position="252"/>
    </location>
</feature>
<feature type="strand" evidence="40">
    <location>
        <begin position="255"/>
        <end position="261"/>
    </location>
</feature>
<feature type="strand" evidence="40">
    <location>
        <begin position="266"/>
        <end position="268"/>
    </location>
</feature>
<feature type="strand" evidence="40">
    <location>
        <begin position="271"/>
        <end position="275"/>
    </location>
</feature>
<feature type="strand" evidence="40">
    <location>
        <begin position="278"/>
        <end position="284"/>
    </location>
</feature>
<feature type="strand" evidence="40">
    <location>
        <begin position="291"/>
        <end position="293"/>
    </location>
</feature>
<feature type="strand" evidence="40">
    <location>
        <begin position="297"/>
        <end position="303"/>
    </location>
</feature>
<feature type="strand" evidence="40">
    <location>
        <begin position="306"/>
        <end position="309"/>
    </location>
</feature>
<feature type="helix" evidence="40">
    <location>
        <begin position="314"/>
        <end position="316"/>
    </location>
</feature>
<feature type="strand" evidence="40">
    <location>
        <begin position="318"/>
        <end position="326"/>
    </location>
</feature>
<feature type="strand" evidence="40">
    <location>
        <begin position="329"/>
        <end position="348"/>
    </location>
</feature>
<feature type="strand" evidence="40">
    <location>
        <begin position="350"/>
        <end position="355"/>
    </location>
</feature>
<feature type="strand" evidence="40">
    <location>
        <begin position="360"/>
        <end position="369"/>
    </location>
</feature>
<feature type="strand" evidence="40">
    <location>
        <begin position="373"/>
        <end position="378"/>
    </location>
</feature>
<feature type="strand" evidence="40">
    <location>
        <begin position="381"/>
        <end position="384"/>
    </location>
</feature>
<feature type="strand" evidence="40">
    <location>
        <begin position="387"/>
        <end position="394"/>
    </location>
</feature>
<feature type="helix" evidence="43">
    <location>
        <begin position="397"/>
        <end position="399"/>
    </location>
</feature>
<feature type="strand" evidence="40">
    <location>
        <begin position="401"/>
        <end position="408"/>
    </location>
</feature>
<feature type="strand" evidence="40">
    <location>
        <begin position="413"/>
        <end position="423"/>
    </location>
</feature>
<feature type="strand" evidence="39">
    <location>
        <begin position="636"/>
        <end position="642"/>
    </location>
</feature>
<feature type="strand" evidence="39">
    <location>
        <begin position="650"/>
        <end position="655"/>
    </location>
</feature>
<feature type="strand" evidence="39">
    <location>
        <begin position="658"/>
        <end position="660"/>
    </location>
</feature>
<feature type="helix" evidence="39">
    <location>
        <begin position="664"/>
        <end position="666"/>
    </location>
</feature>
<feature type="strand" evidence="39">
    <location>
        <begin position="667"/>
        <end position="673"/>
    </location>
</feature>
<feature type="strand" evidence="39">
    <location>
        <begin position="676"/>
        <end position="683"/>
    </location>
</feature>
<feature type="helix" evidence="39">
    <location>
        <begin position="686"/>
        <end position="688"/>
    </location>
</feature>
<feature type="strand" evidence="39">
    <location>
        <begin position="690"/>
        <end position="697"/>
    </location>
</feature>
<feature type="strand" evidence="39">
    <location>
        <begin position="702"/>
        <end position="709"/>
    </location>
</feature>
<feature type="disulfide bond" evidence="2 14 16 17 23 24 25 26 29 30 31 32 33 34 35 36 37 38">
    <location sequence="Q0E9H9-2">
        <begin position="61"/>
        <end position="117"/>
    </location>
</feature>
<feature type="disulfide bond" evidence="17 27">
    <location sequence="Q0E9H9-2">
        <begin position="641"/>
        <end position="695"/>
    </location>
</feature>
<feature type="disulfide bond" evidence="2 14 16 17 23 24 25 26 29 30 31 32 33 34 35 36 37 38">
    <location sequence="Q0E9H9-3">
        <begin position="61"/>
        <end position="117"/>
    </location>
</feature>
<feature type="disulfide bond" evidence="16 26">
    <location sequence="Q0E9H9-4">
        <begin position="641"/>
        <end position="694"/>
    </location>
</feature>
<feature type="disulfide bond" evidence="17 31 36">
    <location sequence="Q0E9H9-5">
        <begin position="160"/>
        <end position="220"/>
    </location>
</feature>
<feature type="disulfide bond" evidence="17 32 33">
    <location sequence="Q0E9H9-6">
        <begin position="160"/>
        <end position="217"/>
    </location>
</feature>
<feature type="disulfide bond" evidence="17 29">
    <location sequence="Q0E9H9-7">
        <begin position="160"/>
        <end position="217"/>
    </location>
</feature>
<feature type="disulfide bond" evidence="14 17 24 30 32">
    <location sequence="Q0E9H9-7">
        <begin position="270"/>
        <end position="323"/>
    </location>
</feature>
<feature type="disulfide bond" evidence="16 26">
    <location sequence="Q0E9H9-7">
        <begin position="641"/>
        <end position="694"/>
    </location>
</feature>
<feature type="disulfide bond" evidence="17 29">
    <location sequence="Q0E9H9-8">
        <begin position="160"/>
        <end position="217"/>
    </location>
</feature>
<feature type="disulfide bond" evidence="2 17 28">
    <location sequence="Q0E9H9-8">
        <begin position="641"/>
        <end position="695"/>
    </location>
</feature>
<feature type="disulfide bond" evidence="17 29">
    <location sequence="Q0E9H9-9">
        <begin position="160"/>
        <end position="217"/>
    </location>
</feature>
<feature type="disulfide bond" evidence="17 34">
    <location sequence="Q0E9H9-10">
        <begin position="160"/>
        <end position="220"/>
    </location>
</feature>
<feature type="disulfide bond" evidence="17 34 36">
    <location sequence="Q0E9H9-10">
        <begin position="276"/>
        <end position="329"/>
    </location>
</feature>
<feature type="binding site" description="ligand shared between homodimeric partners" evidence="17 37">
    <location sequence="Q0E9H9-11">
        <position position="144"/>
    </location>
    <ligand>
        <name>Zn(2+)</name>
        <dbReference type="ChEBI" id="CHEBI:29105"/>
        <label>1</label>
    </ligand>
</feature>
<feature type="binding site" description="ligand shared between homodimeric partners" evidence="17 37">
    <location sequence="Q0E9H9-11">
        <position position="146"/>
    </location>
    <ligand>
        <name>Zn(2+)</name>
        <dbReference type="ChEBI" id="CHEBI:29105"/>
        <label>2</label>
    </ligand>
</feature>
<feature type="binding site" description="ligand shared between homodimeric partners" evidence="17 37">
    <location sequence="Q0E9H9-11">
        <position position="161"/>
    </location>
    <ligand>
        <name>Zn(2+)</name>
        <dbReference type="ChEBI" id="CHEBI:29105"/>
        <label>1</label>
    </ligand>
</feature>
<feature type="disulfide bond" evidence="14 17 24 35 37">
    <location sequence="Q0E9H9-11">
        <begin position="160"/>
        <end position="219"/>
    </location>
</feature>
<feature type="glycosylation site" description="N-linked (GlcNAc...) asparagine" evidence="14 17 23 38">
    <location sequence="Q0E9H9-12">
        <position position="325"/>
    </location>
</feature>
<feature type="disulfide bond" evidence="17 32 33">
    <location sequence="Q0E9H9-12">
        <begin position="160"/>
        <end position="217"/>
    </location>
</feature>
<feature type="disulfide bond" evidence="14 17 23 25 38">
    <location sequence="Q0E9H9-12">
        <begin position="269"/>
        <end position="322"/>
    </location>
</feature>
<feature type="glycosylation site" description="N-linked (GlcNAc...) asparagine" evidence="16 26">
    <location sequence="Q0E9H9-13">
        <position position="325"/>
    </location>
</feature>
<feature type="disulfide bond" evidence="17 32 33">
    <location sequence="Q0E9H9-13">
        <begin position="160"/>
        <end position="217"/>
    </location>
</feature>
<feature type="disulfide bond" evidence="16 26">
    <location sequence="Q0E9H9-13">
        <begin position="270"/>
        <end position="323"/>
    </location>
</feature>
<feature type="disulfide bond" evidence="17 29 31 33 35 37">
    <location sequence="Q0E9H9-14">
        <begin position="270"/>
        <end position="323"/>
    </location>
</feature>
<keyword id="KW-0002">3D-structure</keyword>
<keyword id="KW-0025">Alternative splicing</keyword>
<keyword id="KW-0130">Cell adhesion</keyword>
<keyword id="KW-1003">Cell membrane</keyword>
<keyword id="KW-0966">Cell projection</keyword>
<keyword id="KW-0903">Direct protein sequencing</keyword>
<keyword id="KW-1015">Disulfide bond</keyword>
<keyword id="KW-0325">Glycoprotein</keyword>
<keyword id="KW-0393">Immunoglobulin domain</keyword>
<keyword id="KW-0472">Membrane</keyword>
<keyword id="KW-0524">Neurogenesis</keyword>
<keyword id="KW-1185">Reference proteome</keyword>
<keyword id="KW-0677">Repeat</keyword>
<keyword id="KW-0964">Secreted</keyword>
<keyword id="KW-0732">Signal</keyword>
<keyword id="KW-0812">Transmembrane</keyword>
<keyword id="KW-1133">Transmembrane helix</keyword>
<name>DSCA1_DROME</name>
<gene>
    <name evidence="21" type="primary">Dscam1</name>
    <name evidence="18 21" type="synonym">Dscam</name>
    <name evidence="18 21" type="synonym">p270</name>
    <name evidence="21" type="ORF">CG17800</name>
</gene>
<evidence type="ECO:0000255" key="1"/>
<evidence type="ECO:0000255" key="2">
    <source>
        <dbReference type="PROSITE-ProRule" id="PRU00114"/>
    </source>
</evidence>
<evidence type="ECO:0000255" key="3">
    <source>
        <dbReference type="PROSITE-ProRule" id="PRU00316"/>
    </source>
</evidence>
<evidence type="ECO:0000255" key="4">
    <source>
        <dbReference type="PROSITE-ProRule" id="PRU00498"/>
    </source>
</evidence>
<evidence type="ECO:0000256" key="5">
    <source>
        <dbReference type="SAM" id="MobiDB-lite"/>
    </source>
</evidence>
<evidence type="ECO:0000269" key="6">
    <source>
    </source>
</evidence>
<evidence type="ECO:0000269" key="7">
    <source>
    </source>
</evidence>
<evidence type="ECO:0000269" key="8">
    <source>
    </source>
</evidence>
<evidence type="ECO:0000269" key="9">
    <source>
    </source>
</evidence>
<evidence type="ECO:0000269" key="10">
    <source>
    </source>
</evidence>
<evidence type="ECO:0000269" key="11">
    <source>
    </source>
</evidence>
<evidence type="ECO:0000269" key="12">
    <source>
    </source>
</evidence>
<evidence type="ECO:0000269" key="13">
    <source>
    </source>
</evidence>
<evidence type="ECO:0000269" key="14">
    <source>
    </source>
</evidence>
<evidence type="ECO:0000269" key="15">
    <source>
    </source>
</evidence>
<evidence type="ECO:0000269" key="16">
    <source>
    </source>
</evidence>
<evidence type="ECO:0000269" key="17">
    <source>
    </source>
</evidence>
<evidence type="ECO:0000303" key="18">
    <source>
    </source>
</evidence>
<evidence type="ECO:0000305" key="19"/>
<evidence type="ECO:0000312" key="20">
    <source>
        <dbReference type="EMBL" id="AAF71926.1"/>
    </source>
</evidence>
<evidence type="ECO:0000312" key="21">
    <source>
        <dbReference type="FlyBase" id="FBgn0033159"/>
    </source>
</evidence>
<evidence type="ECO:0000312" key="22">
    <source>
        <dbReference type="Proteomes" id="UP000000803"/>
    </source>
</evidence>
<evidence type="ECO:0007744" key="23">
    <source>
        <dbReference type="PDB" id="2V5M"/>
    </source>
</evidence>
<evidence type="ECO:0007744" key="24">
    <source>
        <dbReference type="PDB" id="2V5R"/>
    </source>
</evidence>
<evidence type="ECO:0007744" key="25">
    <source>
        <dbReference type="PDB" id="2V5S"/>
    </source>
</evidence>
<evidence type="ECO:0007744" key="26">
    <source>
        <dbReference type="PDB" id="3DMK"/>
    </source>
</evidence>
<evidence type="ECO:0007744" key="27">
    <source>
        <dbReference type="PDB" id="4WVR"/>
    </source>
</evidence>
<evidence type="ECO:0007744" key="28">
    <source>
        <dbReference type="PDB" id="4X5L"/>
    </source>
</evidence>
<evidence type="ECO:0007744" key="29">
    <source>
        <dbReference type="PDB" id="4X83"/>
    </source>
</evidence>
<evidence type="ECO:0007744" key="30">
    <source>
        <dbReference type="PDB" id="4X8X"/>
    </source>
</evidence>
<evidence type="ECO:0007744" key="31">
    <source>
        <dbReference type="PDB" id="4X9B"/>
    </source>
</evidence>
<evidence type="ECO:0007744" key="32">
    <source>
        <dbReference type="PDB" id="4X9F"/>
    </source>
</evidence>
<evidence type="ECO:0007744" key="33">
    <source>
        <dbReference type="PDB" id="4X9G"/>
    </source>
</evidence>
<evidence type="ECO:0007744" key="34">
    <source>
        <dbReference type="PDB" id="4X9H"/>
    </source>
</evidence>
<evidence type="ECO:0007744" key="35">
    <source>
        <dbReference type="PDB" id="4X9I"/>
    </source>
</evidence>
<evidence type="ECO:0007744" key="36">
    <source>
        <dbReference type="PDB" id="4XB7"/>
    </source>
</evidence>
<evidence type="ECO:0007744" key="37">
    <source>
        <dbReference type="PDB" id="4XB8"/>
    </source>
</evidence>
<evidence type="ECO:0007744" key="38">
    <source>
        <dbReference type="PDB" id="4XHQ"/>
    </source>
</evidence>
<evidence type="ECO:0007829" key="39">
    <source>
        <dbReference type="PDB" id="4WVR"/>
    </source>
</evidence>
<evidence type="ECO:0007829" key="40">
    <source>
        <dbReference type="PDB" id="4X83"/>
    </source>
</evidence>
<evidence type="ECO:0007829" key="41">
    <source>
        <dbReference type="PDB" id="4X8X"/>
    </source>
</evidence>
<evidence type="ECO:0007829" key="42">
    <source>
        <dbReference type="PDB" id="4X9B"/>
    </source>
</evidence>
<evidence type="ECO:0007829" key="43">
    <source>
        <dbReference type="PDB" id="4XHQ"/>
    </source>
</evidence>
<comment type="function">
    <text evidence="6 7 9 10 11 12 13 15">Cell surface receptor involved in guidance and targeting of growing nerve axons (PubMed:10892653). Required during Bolwig's organ differentiation for accurate and efficient targeting of photoreceptor neuron axons to their synaptic targets in the brain via the P2 intermediate target neuron (PubMed:10892653). Involved in isoneural self-avoidance during dendrite arborization but not in heteroneural recognition and repulsion during tiling by related neurons of the same class (PubMed:17482551). Involved in regulating axon bifurcation and divergent extension in the developing mushroom body (PubMed:11856530, PubMed:15339648). Essential for axon arborisation in ellipsoid body (PubMed:11856530, PubMed:15339648). Exhibits an extraordinary level of molecular diversity resulting from alternative splicing (PubMed:10892653). Isoforms differing in their ectodomain makeup show a high degree of functional redundancy while isoforms with different transmembrane domains are involved in different neuronal morphogenetic processes and are differentially targeted to dendrites or axons (PubMed:15339648). The vast majority of isoforms exhibit strong isoform-specific homophilic binding (PubMed:15339666, PubMed:17889655). Individual cells express a distinct randomly generated repertoire of isoforms (PubMed:14758360). Cell surfaces bearing identical repertoires of Dscam1 isoforms, such as those from the same cell, trigger recognition and avoidance (PubMed:17482551). A subset of isoforms is expressed in fat body cells and hemocytes, cells that are part of the insect immune response, and these isoforms are secreted into the hemolymph (PubMed:16109846). The secreted form comprising the ectodomain can bind to bacteria, such as Escherichia coli, and may act as an opsonin enhancing their phagocytosis by hemocytes (PubMed:16109846).</text>
</comment>
<comment type="subunit">
    <text evidence="6 11 14 15 16 17">Homodimer (via extracellular region); alternative splicing produces a potential 19,008 different ectodomains and the majority of these show strong isoform-specific homodimerization (PubMed:15339666, PubMed:17721508, PubMed:17889655, PubMed:18805093, PubMed:27386517). Interacts (via cytoplasmic domain) with dock/dreadlocks (via SH2 and SH3 domains); the interaction is direct and may require Dscam1 to be phosphorylated (PubMed:10892653).</text>
</comment>
<comment type="interaction">
    <interactant intactId="EBI-2012532">
        <id>Q0E9H9</id>
    </interactant>
    <interactant intactId="EBI-2012532">
        <id>Q0E9H9</id>
        <label>Dscam1</label>
    </interactant>
    <organismsDiffer>false</organismsDiffer>
    <experiments>2</experiments>
</comment>
<comment type="subcellular location">
    <subcellularLocation>
        <location evidence="19">Cell membrane</location>
        <topology evidence="1">Single-pass membrane protein</topology>
    </subcellularLocation>
    <subcellularLocation>
        <location evidence="6 13">Cell projection</location>
        <location evidence="6 13">Neuron projection</location>
    </subcellularLocation>
    <subcellularLocation>
        <location evidence="6 10 13">Cell projection</location>
        <location evidence="6 10 13">Axon</location>
    </subcellularLocation>
    <subcellularLocation>
        <location evidence="10 13">Perikaryon</location>
    </subcellularLocation>
    <subcellularLocation>
        <location evidence="10">Cell projection</location>
        <location evidence="10">Dendrite</location>
    </subcellularLocation>
    <subcellularLocation>
        <location evidence="12">Secreted</location>
    </subcellularLocation>
</comment>
<comment type="alternative products">
    <event type="alternative splicing"/>
    <isoform>
        <id>Q0E9H9-1</id>
        <name evidence="21">A</name>
        <name evidence="19">1,32,9,1</name>
        <sequence type="displayed"/>
    </isoform>
    <isoform>
        <id>Q0E9H9-2</id>
        <name evidence="21">G</name>
        <name evidence="19">1,5,5,2</name>
        <sequence type="described" ref="VSP_062106 VSP_062109 VSP_062119 VSP_062122 VSP_062133"/>
    </isoform>
    <isoform>
        <id>Q0E9H9-3</id>
        <name evidence="21">BF</name>
        <name evidence="19">1,10,3,2</name>
        <sequence type="described" ref="VSP_062105 VSP_062108 VSP_062115 VSP_062124 VSP_062133"/>
    </isoform>
    <isoform>
        <id>Q0E9H9-4</id>
        <name evidence="21">O</name>
        <name evidence="19">2,37,30,2</name>
        <sequence type="described" ref="VSP_062083 VSP_062087 VSP_062093 VSP_062095 VSP_062114 VSP_062126 VSP_062133"/>
    </isoform>
    <isoform>
        <id>Q0E9H9-5</id>
        <name evidence="21">Y</name>
        <name evidence="19">4,46,8,2</name>
        <sequence type="described" ref="VSP_062084 VSP_062085 VSP_062089 VSP_062101 VSP_062120 VSP_062125 VSP_062128 VSP_062129 VSP_062133"/>
    </isoform>
    <isoform>
        <id>Q0E9H9-6</id>
        <name evidence="21">AG</name>
        <name evidence="19">6,36,16,2</name>
        <sequence type="described" ref="VSP_062080 VSP_062085 VSP_062090 VSP_062099 VSP_062113 VSP_062133"/>
    </isoform>
    <isoform>
        <id>Q0E9H9-7</id>
        <name evidence="21">BE</name>
        <name evidence="19">7,9,30,2</name>
        <sequence type="described" ref="VSP_062082 VSP_062085 VSP_062092 VSP_062103 VSP_062114 VSP_062126 VSP_062133"/>
    </isoform>
    <isoform>
        <id>Q0E9H9-8</id>
        <name evidence="21">AM</name>
        <name evidence="19">7,20,9,1</name>
        <sequence type="described" ref="VSP_062082 VSP_062085 VSP_062092 VSP_062104 VSP_062112"/>
    </isoform>
    <isoform>
        <id>Q0E9H9-9</id>
        <name evidence="21">AO</name>
        <name evidence="19">7,42,8,2</name>
        <sequence type="described" ref="VSP_062082 VSP_062085 VSP_062092 VSP_062094 VSP_062120 VSP_062125 VSP_062128 VSP_062129 VSP_062133"/>
    </isoform>
    <isoform>
        <id>Q0E9H9-10</id>
        <name evidence="21">AP</name>
        <name evidence="19">8,4,26,1</name>
        <sequence type="described" ref="VSP_062079 VSP_062091 VSP_062102 VSP_062118"/>
    </isoform>
    <isoform>
        <id>Q0E9H9-11</id>
        <name evidence="21">AU</name>
        <name evidence="19">9,35,3,1</name>
        <sequence type="described" ref="VSP_062081 VSP_062086 VSP_062088 VSP_062098 VSP_062107 VSP_062115 VSP_062124"/>
    </isoform>
    <isoform>
        <id>Q0E9H9-12</id>
        <name evidence="21">AF</name>
        <name evidence="19">6,34,7,2</name>
        <sequence type="described" ref="VSP_062080 VSP_062085 VSP_062090 VSP_062097 VSP_062110 VSP_062116 VSP_062123 VSP_062127 VSP_062130 VSP_062131 VSP_062132 VSP_062133"/>
    </isoform>
    <isoform>
        <id>Q0E9H9-13</id>
        <name evidence="21">AE</name>
        <name evidence="19">6,30,17,1</name>
        <sequence type="described" ref="VSP_062080 VSP_062085 VSP_062090 VSP_062096 VSP_062111 VSP_062117"/>
    </isoform>
    <isoform>
        <id>Q0E9H9-14</id>
        <name evidence="21">BQ</name>
        <name evidence="19">2,44,1,2</name>
        <sequence type="described" ref="VSP_062083 VSP_062087 VSP_062093 VSP_062100 VSP_062121 VSP_062133"/>
    </isoform>
    <text evidence="6 9 12 19">Exhibits an extraordinary level of molecular diversity resulting from alternative splicing (PubMed:10892653). Transcripts are formed of 24 exons and mutually exclusive alternative splicing occurs for exons 4 (12 alternative exons, encoding the N-terminal half of Ig-like domain 2), 6 (48 alternative exons, encoding the N-terminal half of Ig-like domain 3), 9 (33 alternative exons, encoding the entire Ig-like domain 7) and 17 (2 alternative exons, encoding the transmembrane domain), potentially producing 38,016 different isoforms (PubMed:10892653). Selection of alternative exon clusters 4, 6 and 9, encoding the ectodomain, occurs by a combination of stochastic selection with cell type and developmental stage dependent bias (PubMed:14758360). Almost all alternative exons are expressed in the brain while only a subset of exon 9 alternatives are used in isoforms expressed in fat body cells and hemocytes (PubMed:16109846). Isoform nomenclature takes the form W,X,Y,Z where W, X, Y and Z are the numerical identifiers of the exon 4, 6, 9 and 17 alternative present (Probable).</text>
</comment>
<comment type="tissue specificity">
    <text evidence="9 12">Secreted into the hemolymph (at protein level) (PubMed:16109846). Expressed in brain and eye-antennal imaginal disks, including R3/R4 and R7 photoreceptor cells (PubMed:14758360). Individual R3/R4 cells express between 14 and 50 randomly generated mRNAs encoding distinct isoforms (PubMed:14758360).</text>
</comment>
<comment type="developmental stage">
    <text evidence="6 10 12 13">Detected in 12-18 hr embryo extracts (at protein level) (PubMed:10892653). In the developing central nervous system of stage 16 embryos expression is confined to the axons of neuronal cells in the connectives and commissures of the ventral nerve cord (at protein level) (PubMed:10892653, PubMed:15339648). Expressed in Bolwig's organ of stage 16 embryos (at protein level) (PubMed:10892653). Expressed in da neurons of the peripheral nervous system in 2nd and 3rd instar larvae (at protein level) (PubMed:17482551). In wandering 3rd instar larvae, expressed in neuropil structures of the central nervous system (at protein level) (PubMed:15339648). Expressed in larval brain, fat body and hemocytes (at protein level) (PubMed:16109846).</text>
</comment>
<comment type="domain">
    <text evidence="6 11 14 15 16">The ectodomain consists of 10 Ig-like domains. Ig-like domains 2, 3 and 7 are highly variable in different isoforms due to alternative splicing (PubMed:10892653). Ig-like domains 1-8 are sufficient for homodimerization (PubMed:15339666). Dimerization only occurs when all 3 variable Ig-like domains are identical (PubMed:15339666, PubMed:17889655). Intramolecular interactions between Ig-like domain pairs 1-4, 2-3 and 5-6 cause the ectodomain to adopt an S shape conformation, bringing the variable Ig-like domains 2, 3 and 7 into line to form an interaction surface (PubMed:18805093). During dimerization Ig-like domains 2, 3 and 7 self-interact in a modular fashion with their corresponding domain on the opposite molecule in an antiparallel orientation (PubMed:17721508, PubMed:17889655, PubMed:18805093). The Ig-like domain isoform encoded by exon 9.33 is unable to bind another copy of itself (PubMed:17889655).</text>
</comment>
<comment type="domain">
    <text evidence="13">The cytoplasmic domain is required to convert the recognition and adhesion of Dscam1 molecules on opposing membranes into a repulsion signal, possibly by recruiting components of signaling pathways involved in actin cytoskeleton regulation.</text>
</comment>
<comment type="domain">
    <text evidence="6">The 2 PXXP motifs and the polyproline tract are cooperatively involved in the binding of dock/dreadlocks through its SH3 domains (PubMed:10892653). PXXP motif 1 preferentially binds dock SH3 domain 1 (PubMed:10892653). PXXP motif 2 preferentially binds dock SH3 domain 3 (PubMed:10892653). The polyproline tract preferentially binds dock SH3 domain 2 (PubMed:10892653).</text>
</comment>
<comment type="domain">
    <text evidence="6 10">The transmembrane domain is encoded by 2 mutually exclusive alternative exons, 17.1 and 17.2 (PubMed:10892653, PubMed:15339648). Isoforms bearing the transmembrane domain encoded by exon 17.1 are targeted to dendrites while those encoded by exon 17.2 are targeted to axons (PubMed:15339648).</text>
</comment>
<comment type="PTM">
    <text evidence="6 8">Phosphorylated on tyrosine residues in the intracellular domain (PubMed:10892653, PubMed:12014990). Tyrosine protein kinase Src42A and possibly Src64B are involved in this phosphorylation (PubMed:12014990).</text>
</comment>
<comment type="PTM">
    <text evidence="17">Glycosylation on Asn-53 and Asn-325 is involved in stabilizing dimerization.</text>
</comment>
<comment type="PTM">
    <text evidence="12">Proteolytically processed, probably to generate a secreted form.</text>
</comment>
<comment type="disruption phenotype">
    <text evidence="6 12 13">Early larval lethal with disruption of axon pathways in the central nervous system (PubMed:10892653). Dendrite arborisation is disrupted in da neurons of the peripheral nervous system, showing increased levels of overlap and fasciculation of dendrites from the same cell (PubMed:17482551). RNAi-mediated knockdown in embryonic and larval hemocytes reduces their ability to phagocytose bacteria (PubMed:16109846).</text>
</comment>
<proteinExistence type="evidence at protein level"/>
<protein>
    <recommendedName>
        <fullName evidence="19">Cell adhesion molecule Dscam1</fullName>
    </recommendedName>
    <alternativeName>
        <fullName evidence="19">Down syndrome cell adhesion molecule homolog</fullName>
    </alternativeName>
</protein>
<organism evidence="22">
    <name type="scientific">Drosophila melanogaster</name>
    <name type="common">Fruit fly</name>
    <dbReference type="NCBI Taxonomy" id="7227"/>
    <lineage>
        <taxon>Eukaryota</taxon>
        <taxon>Metazoa</taxon>
        <taxon>Ecdysozoa</taxon>
        <taxon>Arthropoda</taxon>
        <taxon>Hexapoda</taxon>
        <taxon>Insecta</taxon>
        <taxon>Pterygota</taxon>
        <taxon>Neoptera</taxon>
        <taxon>Endopterygota</taxon>
        <taxon>Diptera</taxon>
        <taxon>Brachycera</taxon>
        <taxon>Muscomorpha</taxon>
        <taxon>Ephydroidea</taxon>
        <taxon>Drosophilidae</taxon>
        <taxon>Drosophila</taxon>
        <taxon>Sophophora</taxon>
    </lineage>
</organism>
<sequence length="2016" mass="222102">MNMPNERLKWLMLFAAVALIACGSQTLAANPPDADQKGPVFLKEPTNRIDFSNSTGAEIECKASGNPMPEIIWIRSDGTAVGDVPGLRQISSDGKLVFPPFRAEDYRQEVHAQVYACLARNQFGSIISRDVHVRAVVAQYYEADVNKEHVIRGNSAVIKCLIPSFVADFVEVVSWHTDEEENYFPGAEYDGKYLVLPSGELHIREVGPEDGYKSYQCRTKHRLTGETRLSATKGRLVITEPVSSSPPKINALTYKPNIVESMASTAILCPAQGYPAPSFRWYKFIEGTTRKQAVVLNDRVKQVSGTLIIKDAVVEDSGKYLCVVNNSVGGESVETVLTVTAPLSAKIDPPTQTVDFGRPAVFTCQYTGNPIKTVSWMKDGKAIGHSEPVLRIESVKKEDKGMYQCFVRNDQESAEASAELKLGGRFDPPVIRQAFQEETMEPGPSVFLKCVAGGNPTPEISWELDGKKIANNDRYQVGQYVTVNGDVVSYLNITSVHANDGGLYKCIAKSKVGVAEHSAKLNVYGLPYIRQMEKKAIVAGETLIVTCPVAGYPIDSIVWERDNRALPINRKQKVFPNGTLIIENVERNSDQATYTCVAKNQEGYSARGSLEVQVMVPPQVLPFSFGESAADVGDIASANCVVPKGDLPLEIRWSLNSAPIVNGENGFTLVRLNKRTSLLNIDSLNAFHRGVYKCIATNPAGTSEYVAELQVNVPPRWILEPTDKAFAQGSDAKVECKADGFPKPQVTWKKAVGDTPGEYKDLKKSDNIRVEEGTLHVDNIQKTNEGYYLCEAINGIGSGLSAVIMISVQAPPEFTEKLRNQTARRGEPAVLQCEAKGEKPIGILWNMNNMRLDPKNDNRYTIREEILSTGVMSSLSIKRTERSDSALFTCVATNAFGSDDASINMIVQEVPEMPYALKVLDKSGRSVQLSWAQPYDGNSPLDRYIIEFKRSRASWSEIDRVIVPGHTTEAQVQKLSPATTYNIRIVAENAIGTSQSSEAVTIITAEEAPSGKPQNIKVEPVNQTTMRVTWKPPPRTEWNGEILGYYVGYKLSNTNSSYVFETINFITEEGKEHNLELQNLRVYTQYSVVIQAFNKIGAGPLSEEEKQFTAEGTPSQPPSDTACTTLTSQTIRVGWVSPPLESANGVIKTYKVVYAPSDEWYDETKRHYKKTASSDTVLHGLKKYTNYTMQVLATTAGGDGVRSVPIHCQTEPDVPEAPTDVKALVMGNAAILVSWRPPAQPNGIITQYTVYSKAEGAETETKTQKVPHYQMSFEATELEKNKPYEFWVTASTTIGEGQQSKSIVAMPSDQVPAKIASFDDTFTATFKEDAKMPCLAVGAPQPEITWKIKGVEFSANDRMRVLPDGSLLIKSVNRQDAGDYSCHAENSIAKDSITHKLIVLAPPQSPHVTLSATTTDALTVKLKPHEGDTAPLHGYTLHYKPEFGEWETSEVSVDSQKHNIEGLLCGSRYQVYATGFNNIGAGEASDILNTRTKGQKPKLPEKPRFIEVSSNSVSLHFKAWKDGGCPMSHFVVESKKRDQIEWNQISNNVKPDNNYVVLDLEPATWYNLRITAHNSAGFTVAEYDFATLTVTGGTIAPSRDLPELSAEDTIRIILSNLNLVVPVVAALLVIIIAIIVICILRSKGNHHKDDVVYNQTMGPGATLDKRRPDLRDELGYIAPPNRKLPPVPGSNYNTCDRIKRGRGGLRSNHSTWDPRRNPNLYEELKAPPVPMHGNHYGHAHGNAECHYRHPGMEDEICPYATFHLLGFREEMDPTKAMNFQTFPHQNGHAGPVPGHAGTMLPPGHPGHVHSRSGSQSMPRANRYQRKNSQGGQSSIYTPAPEYDDPANCAEEDQYRRYTRVNSQGGSLYSGPGPEYDDPANCAPEEDQYGSQYGGPYGQPYDHYGSRGSMGRRSIGSARNPGNGSPEPPPPPPRNHDMSNSSFNDSKESNEISEAECDRDHGPRGNYGAVKRSPQPKDQRTTEEMRKLIERNETGPKQLQLQQANGAGFTAYDTMAV</sequence>
<accession>Q0E9H9</accession>
<accession>A0A0B4K6Z6</accession>
<accession>Q0E9H6</accession>
<accession>Q0E9H8</accession>
<accession>Q0E9I4</accession>
<accession>Q0E9J0</accession>
<accession>Q0E9J7</accession>
<accession>Q0E9J8</accession>
<accession>Q0E9J9</accession>
<accession>Q0E9K4</accession>
<accession>Q0E9K7</accession>
<accession>Q0E9K9</accession>
<accession>Q0E9L0</accession>
<accession>Q0E9L5</accession>
<accession>Q9NBA1</accession>
<reference evidence="20" key="1">
    <citation type="journal article" date="2000" name="Cell">
        <title>Drosophila Dscam is an axon guidance receptor exhibiting extraordinary molecular diversity.</title>
        <authorList>
            <person name="Schmucker D."/>
            <person name="Clemens J.C."/>
            <person name="Shu H."/>
            <person name="Worby C.A."/>
            <person name="Xiao J."/>
            <person name="Muda M."/>
            <person name="Dixon J.E."/>
            <person name="Zipursky S.L."/>
        </authorList>
    </citation>
    <scope>NUCLEOTIDE SEQUENCE [GENOMIC DNA]</scope>
    <scope>PROTEIN SEQUENCE OF 770-782; 826-832; 926-943; 961-974; 1505-1518; 1672-1682 AND 1716-1725</scope>
    <scope>FUNCTION</scope>
    <scope>INTERACTION WITH DOCK</scope>
    <scope>SUBCELLULAR LOCATION</scope>
    <scope>ALTERNATIVE SPLICING</scope>
    <scope>DEVELOPMENTAL STAGE</scope>
    <scope>DOMAIN</scope>
    <scope>PHOSPHORYLATION</scope>
    <scope>DISRUPTION PHENOTYPE</scope>
</reference>
<reference evidence="22" key="2">
    <citation type="journal article" date="2000" name="Science">
        <title>The genome sequence of Drosophila melanogaster.</title>
        <authorList>
            <person name="Adams M.D."/>
            <person name="Celniker S.E."/>
            <person name="Holt R.A."/>
            <person name="Evans C.A."/>
            <person name="Gocayne J.D."/>
            <person name="Amanatides P.G."/>
            <person name="Scherer S.E."/>
            <person name="Li P.W."/>
            <person name="Hoskins R.A."/>
            <person name="Galle R.F."/>
            <person name="George R.A."/>
            <person name="Lewis S.E."/>
            <person name="Richards S."/>
            <person name="Ashburner M."/>
            <person name="Henderson S.N."/>
            <person name="Sutton G.G."/>
            <person name="Wortman J.R."/>
            <person name="Yandell M.D."/>
            <person name="Zhang Q."/>
            <person name="Chen L.X."/>
            <person name="Brandon R.C."/>
            <person name="Rogers Y.-H.C."/>
            <person name="Blazej R.G."/>
            <person name="Champe M."/>
            <person name="Pfeiffer B.D."/>
            <person name="Wan K.H."/>
            <person name="Doyle C."/>
            <person name="Baxter E.G."/>
            <person name="Helt G."/>
            <person name="Nelson C.R."/>
            <person name="Miklos G.L.G."/>
            <person name="Abril J.F."/>
            <person name="Agbayani A."/>
            <person name="An H.-J."/>
            <person name="Andrews-Pfannkoch C."/>
            <person name="Baldwin D."/>
            <person name="Ballew R.M."/>
            <person name="Basu A."/>
            <person name="Baxendale J."/>
            <person name="Bayraktaroglu L."/>
            <person name="Beasley E.M."/>
            <person name="Beeson K.Y."/>
            <person name="Benos P.V."/>
            <person name="Berman B.P."/>
            <person name="Bhandari D."/>
            <person name="Bolshakov S."/>
            <person name="Borkova D."/>
            <person name="Botchan M.R."/>
            <person name="Bouck J."/>
            <person name="Brokstein P."/>
            <person name="Brottier P."/>
            <person name="Burtis K.C."/>
            <person name="Busam D.A."/>
            <person name="Butler H."/>
            <person name="Cadieu E."/>
            <person name="Center A."/>
            <person name="Chandra I."/>
            <person name="Cherry J.M."/>
            <person name="Cawley S."/>
            <person name="Dahlke C."/>
            <person name="Davenport L.B."/>
            <person name="Davies P."/>
            <person name="de Pablos B."/>
            <person name="Delcher A."/>
            <person name="Deng Z."/>
            <person name="Mays A.D."/>
            <person name="Dew I."/>
            <person name="Dietz S.M."/>
            <person name="Dodson K."/>
            <person name="Doup L.E."/>
            <person name="Downes M."/>
            <person name="Dugan-Rocha S."/>
            <person name="Dunkov B.C."/>
            <person name="Dunn P."/>
            <person name="Durbin K.J."/>
            <person name="Evangelista C.C."/>
            <person name="Ferraz C."/>
            <person name="Ferriera S."/>
            <person name="Fleischmann W."/>
            <person name="Fosler C."/>
            <person name="Gabrielian A.E."/>
            <person name="Garg N.S."/>
            <person name="Gelbart W.M."/>
            <person name="Glasser K."/>
            <person name="Glodek A."/>
            <person name="Gong F."/>
            <person name="Gorrell J.H."/>
            <person name="Gu Z."/>
            <person name="Guan P."/>
            <person name="Harris M."/>
            <person name="Harris N.L."/>
            <person name="Harvey D.A."/>
            <person name="Heiman T.J."/>
            <person name="Hernandez J.R."/>
            <person name="Houck J."/>
            <person name="Hostin D."/>
            <person name="Houston K.A."/>
            <person name="Howland T.J."/>
            <person name="Wei M.-H."/>
            <person name="Ibegwam C."/>
            <person name="Jalali M."/>
            <person name="Kalush F."/>
            <person name="Karpen G.H."/>
            <person name="Ke Z."/>
            <person name="Kennison J.A."/>
            <person name="Ketchum K.A."/>
            <person name="Kimmel B.E."/>
            <person name="Kodira C.D."/>
            <person name="Kraft C.L."/>
            <person name="Kravitz S."/>
            <person name="Kulp D."/>
            <person name="Lai Z."/>
            <person name="Lasko P."/>
            <person name="Lei Y."/>
            <person name="Levitsky A.A."/>
            <person name="Li J.H."/>
            <person name="Li Z."/>
            <person name="Liang Y."/>
            <person name="Lin X."/>
            <person name="Liu X."/>
            <person name="Mattei B."/>
            <person name="McIntosh T.C."/>
            <person name="McLeod M.P."/>
            <person name="McPherson D."/>
            <person name="Merkulov G."/>
            <person name="Milshina N.V."/>
            <person name="Mobarry C."/>
            <person name="Morris J."/>
            <person name="Moshrefi A."/>
            <person name="Mount S.M."/>
            <person name="Moy M."/>
            <person name="Murphy B."/>
            <person name="Murphy L."/>
            <person name="Muzny D.M."/>
            <person name="Nelson D.L."/>
            <person name="Nelson D.R."/>
            <person name="Nelson K.A."/>
            <person name="Nixon K."/>
            <person name="Nusskern D.R."/>
            <person name="Pacleb J.M."/>
            <person name="Palazzolo M."/>
            <person name="Pittman G.S."/>
            <person name="Pan S."/>
            <person name="Pollard J."/>
            <person name="Puri V."/>
            <person name="Reese M.G."/>
            <person name="Reinert K."/>
            <person name="Remington K."/>
            <person name="Saunders R.D.C."/>
            <person name="Scheeler F."/>
            <person name="Shen H."/>
            <person name="Shue B.C."/>
            <person name="Siden-Kiamos I."/>
            <person name="Simpson M."/>
            <person name="Skupski M.P."/>
            <person name="Smith T.J."/>
            <person name="Spier E."/>
            <person name="Spradling A.C."/>
            <person name="Stapleton M."/>
            <person name="Strong R."/>
            <person name="Sun E."/>
            <person name="Svirskas R."/>
            <person name="Tector C."/>
            <person name="Turner R."/>
            <person name="Venter E."/>
            <person name="Wang A.H."/>
            <person name="Wang X."/>
            <person name="Wang Z.-Y."/>
            <person name="Wassarman D.A."/>
            <person name="Weinstock G.M."/>
            <person name="Weissenbach J."/>
            <person name="Williams S.M."/>
            <person name="Woodage T."/>
            <person name="Worley K.C."/>
            <person name="Wu D."/>
            <person name="Yang S."/>
            <person name="Yao Q.A."/>
            <person name="Ye J."/>
            <person name="Yeh R.-F."/>
            <person name="Zaveri J.S."/>
            <person name="Zhan M."/>
            <person name="Zhang G."/>
            <person name="Zhao Q."/>
            <person name="Zheng L."/>
            <person name="Zheng X.H."/>
            <person name="Zhong F.N."/>
            <person name="Zhong W."/>
            <person name="Zhou X."/>
            <person name="Zhu S.C."/>
            <person name="Zhu X."/>
            <person name="Smith H.O."/>
            <person name="Gibbs R.A."/>
            <person name="Myers E.W."/>
            <person name="Rubin G.M."/>
            <person name="Venter J.C."/>
        </authorList>
    </citation>
    <scope>NUCLEOTIDE SEQUENCE [LARGE SCALE GENOMIC DNA]</scope>
    <source>
        <strain evidence="22">Berkeley</strain>
    </source>
</reference>
<reference evidence="22" key="3">
    <citation type="journal article" date="2002" name="Genome Biol.">
        <title>Annotation of the Drosophila melanogaster euchromatic genome: a systematic review.</title>
        <authorList>
            <person name="Misra S."/>
            <person name="Crosby M.A."/>
            <person name="Mungall C.J."/>
            <person name="Matthews B.B."/>
            <person name="Campbell K.S."/>
            <person name="Hradecky P."/>
            <person name="Huang Y."/>
            <person name="Kaminker J.S."/>
            <person name="Millburn G.H."/>
            <person name="Prochnik S.E."/>
            <person name="Smith C.D."/>
            <person name="Tupy J.L."/>
            <person name="Whitfield E.J."/>
            <person name="Bayraktaroglu L."/>
            <person name="Berman B.P."/>
            <person name="Bettencourt B.R."/>
            <person name="Celniker S.E."/>
            <person name="de Grey A.D.N.J."/>
            <person name="Drysdale R.A."/>
            <person name="Harris N.L."/>
            <person name="Richter J."/>
            <person name="Russo S."/>
            <person name="Schroeder A.J."/>
            <person name="Shu S.Q."/>
            <person name="Stapleton M."/>
            <person name="Yamada C."/>
            <person name="Ashburner M."/>
            <person name="Gelbart W.M."/>
            <person name="Rubin G.M."/>
            <person name="Lewis S.E."/>
        </authorList>
    </citation>
    <scope>GENOME REANNOTATION</scope>
    <source>
        <strain evidence="22">Berkeley</strain>
    </source>
</reference>
<reference evidence="19" key="4">
    <citation type="journal article" date="2002" name="Biochem. J.">
        <title>Use of double-stranded RNA-mediated interference to determine the substrates of protein tyrosine kinases and phosphatases.</title>
        <authorList>
            <person name="Muda M."/>
            <person name="Worby C.A."/>
            <person name="Simonson-Leff N."/>
            <person name="Clemens J.C."/>
            <person name="Dixon J.E."/>
        </authorList>
    </citation>
    <scope>PHOSPHORYLATION</scope>
</reference>
<reference evidence="19" key="5">
    <citation type="journal article" date="2002" name="Neuron">
        <title>Drosophila Dscam is required for divergent segregation of sister branches and suppresses ectopic bifurcation of axons.</title>
        <authorList>
            <person name="Wang J."/>
            <person name="Zugates C.T."/>
            <person name="Liang I.H."/>
            <person name="Lee C.H."/>
            <person name="Lee T."/>
        </authorList>
    </citation>
    <scope>FUNCTION</scope>
</reference>
<reference evidence="19" key="6">
    <citation type="journal article" date="2004" name="Cell">
        <title>Alternative splicing of Drosophila Dscam generates axon guidance receptors that exhibit isoform-specific homophilic binding.</title>
        <authorList>
            <person name="Wojtowicz W.M."/>
            <person name="Flanagan J.J."/>
            <person name="Millard S.S."/>
            <person name="Zipursky S.L."/>
            <person name="Clemens J.C."/>
        </authorList>
    </citation>
    <scope>FUNCTION</scope>
    <scope>SUBUNIT</scope>
    <scope>DOMAIN</scope>
</reference>
<reference evidence="19" key="7">
    <citation type="journal article" date="2004" name="Nat. Genet.">
        <title>Stochastic yet biased expression of multiple Dscam splice variants by individual cells.</title>
        <authorList>
            <person name="Neves G."/>
            <person name="Zucker J."/>
            <person name="Daly M."/>
            <person name="Chess A."/>
        </authorList>
    </citation>
    <scope>FUNCTION</scope>
    <scope>ALTERNATIVE SPLICING</scope>
    <scope>TISSUE SPECIFICITY</scope>
</reference>
<reference evidence="19" key="8">
    <citation type="journal article" date="2004" name="Neuron">
        <title>Transmembrane/juxtamembrane domain-dependent Dscam distribution and function during mushroom body neuronal morphogenesis.</title>
        <authorList>
            <person name="Wang J."/>
            <person name="Ma X."/>
            <person name="Yang J.S."/>
            <person name="Zheng X."/>
            <person name="Zugates C.T."/>
            <person name="Lee C.H."/>
            <person name="Lee T."/>
        </authorList>
    </citation>
    <scope>FUNCTION</scope>
    <scope>SUBCELLULAR LOCATION</scope>
    <scope>DEVELOPMENTAL STAGE</scope>
    <scope>DOMAIN</scope>
</reference>
<reference evidence="19" key="9">
    <citation type="journal article" date="2005" name="Science">
        <title>Extensive diversity of Ig-superfamily proteins in the immune system of insects.</title>
        <authorList>
            <person name="Watson F.L."/>
            <person name="Puettmann-Holgado R."/>
            <person name="Thomas F."/>
            <person name="Lamar D.L."/>
            <person name="Hughes M."/>
            <person name="Kondo M."/>
            <person name="Rebel V.I."/>
            <person name="Schmucker D."/>
        </authorList>
    </citation>
    <scope>IDENTIFICATION BY MASS SPECTROMETRY</scope>
    <scope>FUNCTION</scope>
    <scope>SUBCELLULAR LOCATION</scope>
    <scope>ALTERNATIVE SPLICING</scope>
    <scope>TISSUE SPECIFICITY</scope>
    <scope>DEVELOPMENTAL STAGE</scope>
    <scope>PROTEOLYTIC CLEAVAGE</scope>
    <scope>DISRUPTION PHENOTYPE</scope>
</reference>
<reference evidence="19" key="10">
    <citation type="journal article" date="2007" name="Cell">
        <title>Dendrite self-avoidance is controlled by Dscam.</title>
        <authorList>
            <person name="Matthews B.J."/>
            <person name="Kim M.E."/>
            <person name="Flanagan J.J."/>
            <person name="Hattori D."/>
            <person name="Clemens J.C."/>
            <person name="Zipursky S.L."/>
            <person name="Grueber W.B."/>
        </authorList>
    </citation>
    <scope>FUNCTION</scope>
    <scope>SUBCELLULAR LOCATION</scope>
    <scope>DEVELOPMENTAL STAGE</scope>
    <scope>DOMAIN</scope>
    <scope>DISRUPTION PHENOTYPE</scope>
</reference>
<reference evidence="19" key="11">
    <citation type="journal article" date="2007" name="Cell">
        <title>A vast repertoire of Dscam binding specificities arises from modular interactions of variable Ig domains.</title>
        <authorList>
            <person name="Wojtowicz W.M."/>
            <person name="Wu W."/>
            <person name="Andre I."/>
            <person name="Qian B."/>
            <person name="Baker D."/>
            <person name="Zipursky S.L."/>
        </authorList>
    </citation>
    <scope>FUNCTION</scope>
    <scope>SUBUNIT</scope>
    <scope>DOMAIN</scope>
</reference>
<reference evidence="23 24 25" key="12">
    <citation type="journal article" date="2007" name="Nature">
        <title>Structural basis of Dscam isoform specificity.</title>
        <authorList>
            <person name="Meijers R."/>
            <person name="Puettmann-Holgado R."/>
            <person name="Skiniotis G."/>
            <person name="Liu J.H."/>
            <person name="Walz T."/>
            <person name="Wang J.H."/>
            <person name="Schmucker D."/>
        </authorList>
    </citation>
    <scope>X-RAY CRYSTALLOGRAPHY (1.95 ANGSTROMS) OF 36-423</scope>
    <scope>SUBUNIT</scope>
    <scope>DOMAIN</scope>
    <scope>GLYCOSYLATION AT ASN-53 AND ASN-325</scope>
    <scope>DISULFIDE BONDS</scope>
</reference>
<reference evidence="26" key="13">
    <citation type="journal article" date="2008" name="Cell">
        <title>A double S shape provides the structural basis for the extraordinary binding specificity of Dscam isoforms.</title>
        <authorList>
            <person name="Sawaya M.R."/>
            <person name="Wojtowicz W.M."/>
            <person name="Andre I."/>
            <person name="Qian B."/>
            <person name="Wu W."/>
            <person name="Baker D."/>
            <person name="Eisenberg D."/>
            <person name="Zipursky S.L."/>
        </authorList>
    </citation>
    <scope>X-RAY CRYSTALLOGRAPHY (4.19 ANGSTROMS) OF 1-810</scope>
    <scope>SUBUNIT</scope>
    <scope>DOMAIN</scope>
    <scope>GLYCOSYLATION AT ASN-53; ASN-325; ASN-492 AND ASN-577</scope>
    <scope>DISULFIDE BONDS</scope>
    <scope>MUTAGENESIS OF ARG-530</scope>
</reference>
<reference evidence="27 28 29 30 31 32 33 34 35 36 37" key="14">
    <citation type="journal article" date="2016" name="Sci. Adv.">
        <title>Structural basis of Dscam1 homodimerization: Insights into context constraint for protein recognition.</title>
        <authorList>
            <person name="Li S.A."/>
            <person name="Cheng L."/>
            <person name="Yu Y."/>
            <person name="Chen Q."/>
        </authorList>
    </citation>
    <scope>X-RAY CRYSTALLOGRAPHY (1.90 ANGSTROMS) OF 34-431 AND 617-713</scope>
    <scope>SUBUNIT</scope>
    <scope>GLYCOSYLATION AT ASN-53 AND ASN-325</scope>
    <scope>DISULFIDE BONDS</scope>
</reference>
<dbReference type="EMBL" id="AF260530">
    <property type="protein sequence ID" value="AAF71926.1"/>
    <property type="molecule type" value="Genomic_DNA"/>
</dbReference>
<dbReference type="EMBL" id="AE013599">
    <property type="protein sequence ID" value="AAF59271.2"/>
    <property type="molecule type" value="Genomic_DNA"/>
</dbReference>
<dbReference type="EMBL" id="AE013599">
    <property type="protein sequence ID" value="ABI31042.1"/>
    <property type="molecule type" value="Genomic_DNA"/>
</dbReference>
<dbReference type="EMBL" id="AE013599">
    <property type="protein sequence ID" value="ABI31045.1"/>
    <property type="molecule type" value="Genomic_DNA"/>
</dbReference>
<dbReference type="EMBL" id="AE013599">
    <property type="protein sequence ID" value="ABI31049.1"/>
    <property type="molecule type" value="Genomic_DNA"/>
</dbReference>
<dbReference type="EMBL" id="AE013599">
    <property type="protein sequence ID" value="ABI31053.1"/>
    <property type="molecule type" value="Genomic_DNA"/>
</dbReference>
<dbReference type="EMBL" id="AE013599">
    <property type="protein sequence ID" value="ABI31057.1"/>
    <property type="molecule type" value="Genomic_DNA"/>
</dbReference>
<dbReference type="EMBL" id="AE013599">
    <property type="protein sequence ID" value="ABI31067.1"/>
    <property type="molecule type" value="Genomic_DNA"/>
</dbReference>
<dbReference type="EMBL" id="AE013599">
    <property type="protein sequence ID" value="ABI31069.1"/>
    <property type="molecule type" value="Genomic_DNA"/>
</dbReference>
<dbReference type="EMBL" id="AE013599">
    <property type="protein sequence ID" value="ABI31073.1"/>
    <property type="molecule type" value="Genomic_DNA"/>
</dbReference>
<dbReference type="EMBL" id="AE013599">
    <property type="protein sequence ID" value="ABI31075.1"/>
    <property type="molecule type" value="Genomic_DNA"/>
</dbReference>
<dbReference type="EMBL" id="AE013599">
    <property type="protein sequence ID" value="ABI31076.1"/>
    <property type="molecule type" value="Genomic_DNA"/>
</dbReference>
<dbReference type="EMBL" id="AE013599">
    <property type="protein sequence ID" value="ABI31078.1"/>
    <property type="molecule type" value="Genomic_DNA"/>
</dbReference>
<dbReference type="EMBL" id="AE013599">
    <property type="protein sequence ID" value="ABI31080.1"/>
    <property type="molecule type" value="Genomic_DNA"/>
</dbReference>
<dbReference type="EMBL" id="AE013599">
    <property type="protein sequence ID" value="AFH07931.1"/>
    <property type="molecule type" value="Genomic_DNA"/>
</dbReference>
<dbReference type="RefSeq" id="NP_001036491.1">
    <molecule id="Q0E9H9-5"/>
    <property type="nucleotide sequence ID" value="NM_001043026.1"/>
</dbReference>
<dbReference type="RefSeq" id="NP_001036494.1">
    <molecule id="Q0E9H9-3"/>
    <property type="nucleotide sequence ID" value="NM_001043029.1"/>
</dbReference>
<dbReference type="RefSeq" id="NP_001036498.1">
    <molecule id="Q0E9H9-4"/>
    <property type="nucleotide sequence ID" value="NM_001043033.1"/>
</dbReference>
<dbReference type="RefSeq" id="NP_001036502.1">
    <molecule id="Q0E9H9-11"/>
    <property type="nucleotide sequence ID" value="NM_001043037.1"/>
</dbReference>
<dbReference type="RefSeq" id="NP_001036506.1">
    <molecule id="Q0E9H9-7"/>
    <property type="nucleotide sequence ID" value="NM_001043041.1"/>
</dbReference>
<dbReference type="RefSeq" id="NP_001036516.1">
    <molecule id="Q0E9H9-10"/>
    <property type="nucleotide sequence ID" value="NM_001043051.1"/>
</dbReference>
<dbReference type="RefSeq" id="NP_001036518.1">
    <molecule id="Q0E9H9-6"/>
    <property type="nucleotide sequence ID" value="NM_001043053.1"/>
</dbReference>
<dbReference type="RefSeq" id="NP_001036522.1">
    <molecule id="Q0E9H9-8"/>
    <property type="nucleotide sequence ID" value="NM_001043057.1"/>
</dbReference>
<dbReference type="RefSeq" id="NP_001036524.1">
    <molecule id="Q0E9H9-9"/>
    <property type="nucleotide sequence ID" value="NM_001043059.1"/>
</dbReference>
<dbReference type="RefSeq" id="NP_001036525.1">
    <molecule id="Q0E9H9-2"/>
    <property type="nucleotide sequence ID" value="NM_001043060.1"/>
</dbReference>
<dbReference type="RefSeq" id="NP_001036527.1">
    <molecule id="Q0E9H9-12"/>
    <property type="nucleotide sequence ID" value="NM_001043062.1"/>
</dbReference>
<dbReference type="RefSeq" id="NP_001036529.1">
    <molecule id="Q0E9H9-13"/>
    <property type="nucleotide sequence ID" value="NM_001043064.1"/>
</dbReference>
<dbReference type="RefSeq" id="NP_001246176.1">
    <molecule id="Q0E9H9-14"/>
    <property type="nucleotide sequence ID" value="NM_001259247.1"/>
</dbReference>
<dbReference type="RefSeq" id="NP_724543.1">
    <molecule id="Q0E9H9-1"/>
    <property type="nucleotide sequence ID" value="NM_165514.1"/>
</dbReference>
<dbReference type="PDB" id="2V5M">
    <property type="method" value="X-ray"/>
    <property type="resolution" value="1.95 A"/>
    <property type="chains" value="A=36-423"/>
</dbReference>
<dbReference type="PDB" id="2V5R">
    <property type="method" value="X-ray"/>
    <property type="resolution" value="3.00 A"/>
    <property type="chains" value="A/B=36-424"/>
</dbReference>
<dbReference type="PDB" id="2V5S">
    <property type="method" value="X-ray"/>
    <property type="resolution" value="2.30 A"/>
    <property type="chains" value="A/B=36-423"/>
</dbReference>
<dbReference type="PDB" id="3DMK">
    <property type="method" value="X-ray"/>
    <property type="resolution" value="4.19 A"/>
    <property type="chains" value="A/B/C=1-810"/>
</dbReference>
<dbReference type="PDB" id="4WVR">
    <property type="method" value="X-ray"/>
    <property type="resolution" value="1.95 A"/>
    <property type="chains" value="A/B/C/D=617-713"/>
</dbReference>
<dbReference type="PDB" id="4X5L">
    <property type="method" value="X-ray"/>
    <property type="resolution" value="2.37 A"/>
    <property type="chains" value="A/B/C/D=617-713"/>
</dbReference>
<dbReference type="PDB" id="4X83">
    <property type="method" value="X-ray"/>
    <property type="resolution" value="1.90 A"/>
    <property type="chains" value="A/B/C/D=34-425"/>
</dbReference>
<dbReference type="PDB" id="4X8X">
    <property type="method" value="X-ray"/>
    <property type="resolution" value="2.50 A"/>
    <property type="chains" value="A/B=34-425"/>
</dbReference>
<dbReference type="PDB" id="4X9B">
    <property type="method" value="X-ray"/>
    <property type="resolution" value="2.20 A"/>
    <property type="chains" value="A/B=34-428"/>
</dbReference>
<dbReference type="PDB" id="4X9F">
    <property type="method" value="X-ray"/>
    <property type="resolution" value="2.35 A"/>
    <property type="chains" value="A/B=34-425"/>
</dbReference>
<dbReference type="PDB" id="4X9G">
    <property type="method" value="X-ray"/>
    <property type="resolution" value="3.40 A"/>
    <property type="chains" value="A/B=34-425"/>
</dbReference>
<dbReference type="PDB" id="4X9H">
    <property type="method" value="X-ray"/>
    <property type="resolution" value="2.95 A"/>
    <property type="chains" value="A/B=34-431"/>
</dbReference>
<dbReference type="PDB" id="4X9I">
    <property type="method" value="X-ray"/>
    <property type="resolution" value="2.90 A"/>
    <property type="chains" value="A/B=34-427"/>
</dbReference>
<dbReference type="PDB" id="4XB7">
    <property type="method" value="X-ray"/>
    <property type="resolution" value="4.00 A"/>
    <property type="chains" value="A/B=34-431"/>
</dbReference>
<dbReference type="PDB" id="4XB8">
    <property type="method" value="X-ray"/>
    <property type="resolution" value="3.20 A"/>
    <property type="chains" value="A/B=34-427"/>
</dbReference>
<dbReference type="PDB" id="4XHQ">
    <property type="method" value="X-ray"/>
    <property type="resolution" value="1.95 A"/>
    <property type="chains" value="A=36-423"/>
</dbReference>
<dbReference type="PDBsum" id="2V5M"/>
<dbReference type="PDBsum" id="2V5R"/>
<dbReference type="PDBsum" id="2V5S"/>
<dbReference type="PDBsum" id="3DMK"/>
<dbReference type="PDBsum" id="4WVR"/>
<dbReference type="PDBsum" id="4X5L"/>
<dbReference type="PDBsum" id="4X83"/>
<dbReference type="PDBsum" id="4X8X"/>
<dbReference type="PDBsum" id="4X9B"/>
<dbReference type="PDBsum" id="4X9F"/>
<dbReference type="PDBsum" id="4X9G"/>
<dbReference type="PDBsum" id="4X9H"/>
<dbReference type="PDBsum" id="4X9I"/>
<dbReference type="PDBsum" id="4XB7"/>
<dbReference type="PDBsum" id="4XB8"/>
<dbReference type="PDBsum" id="4XHQ"/>
<dbReference type="SMR" id="Q0E9H9"/>
<dbReference type="IntAct" id="Q0E9H9">
    <property type="interactions" value="6"/>
</dbReference>
<dbReference type="GlyCosmos" id="Q9NBA1">
    <property type="glycosylation" value="3 sites, No reported glycans"/>
</dbReference>
<dbReference type="GlyGen" id="Q0E9H9">
    <property type="glycosylation" value="12 sites"/>
</dbReference>
<dbReference type="iPTMnet" id="Q0E9H9"/>
<dbReference type="EnsemblMetazoa" id="FBtr0089016">
    <molecule id="Q0E9H9-1"/>
    <property type="protein sequence ID" value="FBpp0088088"/>
    <property type="gene ID" value="FBgn0033159"/>
</dbReference>
<dbReference type="EnsemblMetazoa" id="FBtr0111053">
    <molecule id="Q0E9H9-13"/>
    <property type="protein sequence ID" value="FBpp0110345"/>
    <property type="gene ID" value="FBgn0033159"/>
</dbReference>
<dbReference type="EnsemblMetazoa" id="FBtr0111054">
    <molecule id="Q0E9H9-12"/>
    <property type="protein sequence ID" value="FBpp0110346"/>
    <property type="gene ID" value="FBgn0033159"/>
</dbReference>
<dbReference type="EnsemblMetazoa" id="FBtr0111055">
    <molecule id="Q0E9H9-6"/>
    <property type="protein sequence ID" value="FBpp0110347"/>
    <property type="gene ID" value="FBgn0033159"/>
</dbReference>
<dbReference type="EnsemblMetazoa" id="FBtr0111061">
    <molecule id="Q0E9H9-8"/>
    <property type="protein sequence ID" value="FBpp0110353"/>
    <property type="gene ID" value="FBgn0033159"/>
</dbReference>
<dbReference type="EnsemblMetazoa" id="FBtr0111062">
    <molecule id="Q0E9H9-9"/>
    <property type="protein sequence ID" value="FBpp0110355"/>
    <property type="gene ID" value="FBgn0033159"/>
</dbReference>
<dbReference type="EnsemblMetazoa" id="FBtr0111063">
    <molecule id="Q0E9H9-10"/>
    <property type="protein sequence ID" value="FBpp0110356"/>
    <property type="gene ID" value="FBgn0033159"/>
</dbReference>
<dbReference type="EnsemblMetazoa" id="FBtr0111067">
    <molecule id="Q0E9H9-11"/>
    <property type="protein sequence ID" value="FBpp0110361"/>
    <property type="gene ID" value="FBgn0033159"/>
</dbReference>
<dbReference type="EnsemblMetazoa" id="FBtr0111077">
    <molecule id="Q0E9H9-7"/>
    <property type="protein sequence ID" value="FBpp0110371"/>
    <property type="gene ID" value="FBgn0033159"/>
</dbReference>
<dbReference type="EnsemblMetazoa" id="FBtr0111078">
    <molecule id="Q0E9H9-3"/>
    <property type="protein sequence ID" value="FBpp0110372"/>
    <property type="gene ID" value="FBgn0033159"/>
</dbReference>
<dbReference type="EnsemblMetazoa" id="FBtr0111082">
    <molecule id="Q0E9H9-2"/>
    <property type="protein sequence ID" value="FBpp0110376"/>
    <property type="gene ID" value="FBgn0033159"/>
</dbReference>
<dbReference type="EnsemblMetazoa" id="FBtr0111089">
    <molecule id="Q0E9H9-4"/>
    <property type="protein sequence ID" value="FBpp0110384"/>
    <property type="gene ID" value="FBgn0033159"/>
</dbReference>
<dbReference type="EnsemblMetazoa" id="FBtr0111099">
    <molecule id="Q0E9H9-5"/>
    <property type="protein sequence ID" value="FBpp0110394"/>
    <property type="gene ID" value="FBgn0033159"/>
</dbReference>
<dbReference type="EnsemblMetazoa" id="FBtr0306781">
    <molecule id="Q0E9H9-14"/>
    <property type="protein sequence ID" value="FBpp0297697"/>
    <property type="gene ID" value="FBgn0033159"/>
</dbReference>
<dbReference type="GeneID" id="35652"/>
<dbReference type="KEGG" id="dme:Dmel_CG17800"/>
<dbReference type="UCSC" id="CG17800-RA">
    <molecule id="Q0E9H9-1"/>
    <property type="organism name" value="d. melanogaster"/>
</dbReference>
<dbReference type="AGR" id="FB:FBgn0033159"/>
<dbReference type="CTD" id="35652"/>
<dbReference type="FlyBase" id="FBgn0033159">
    <property type="gene designation" value="Dscam1"/>
</dbReference>
<dbReference type="VEuPathDB" id="VectorBase:FBgn0033159"/>
<dbReference type="HOGENOM" id="CLU_001038_4_0_1"/>
<dbReference type="InParanoid" id="A0A0B4K6Z6"/>
<dbReference type="OrthoDB" id="5982258at2759"/>
<dbReference type="Reactome" id="R-DME-376172">
    <property type="pathway name" value="DSCAM interactions"/>
</dbReference>
<dbReference type="BioGRID-ORCS" id="35652">
    <property type="hits" value="0 hits in 3 CRISPR screens"/>
</dbReference>
<dbReference type="EvolutionaryTrace" id="Q0E9H9"/>
<dbReference type="GenomeRNAi" id="35652"/>
<dbReference type="PRO" id="PR:Q0E9H9"/>
<dbReference type="Proteomes" id="UP000000803">
    <property type="component" value="Chromosome 2R"/>
</dbReference>
<dbReference type="Bgee" id="FBgn0033159">
    <property type="expression patterns" value="Expressed in cortex associated CNS glial cell (Drosophila) in post-embryonic organism and 228 other cell types or tissues"/>
</dbReference>
<dbReference type="ExpressionAtlas" id="Q0E9H9">
    <property type="expression patterns" value="baseline and differential"/>
</dbReference>
<dbReference type="GO" id="GO:0030424">
    <property type="term" value="C:axon"/>
    <property type="evidence" value="ECO:0000314"/>
    <property type="project" value="FlyBase"/>
</dbReference>
<dbReference type="GO" id="GO:0030425">
    <property type="term" value="C:dendrite"/>
    <property type="evidence" value="ECO:0000314"/>
    <property type="project" value="FlyBase"/>
</dbReference>
<dbReference type="GO" id="GO:0005576">
    <property type="term" value="C:extracellular region"/>
    <property type="evidence" value="ECO:0007669"/>
    <property type="project" value="UniProtKB-SubCell"/>
</dbReference>
<dbReference type="GO" id="GO:0043005">
    <property type="term" value="C:neuron projection"/>
    <property type="evidence" value="ECO:0000314"/>
    <property type="project" value="FlyBase"/>
</dbReference>
<dbReference type="GO" id="GO:0043025">
    <property type="term" value="C:neuronal cell body"/>
    <property type="evidence" value="ECO:0000314"/>
    <property type="project" value="FlyBase"/>
</dbReference>
<dbReference type="GO" id="GO:0043204">
    <property type="term" value="C:perikaryon"/>
    <property type="evidence" value="ECO:0007669"/>
    <property type="project" value="UniProtKB-SubCell"/>
</dbReference>
<dbReference type="GO" id="GO:0005886">
    <property type="term" value="C:plasma membrane"/>
    <property type="evidence" value="ECO:0000255"/>
    <property type="project" value="FlyBase"/>
</dbReference>
<dbReference type="GO" id="GO:0003823">
    <property type="term" value="F:antigen binding"/>
    <property type="evidence" value="ECO:0000314"/>
    <property type="project" value="FlyBase"/>
</dbReference>
<dbReference type="GO" id="GO:0008046">
    <property type="term" value="F:axon guidance receptor activity"/>
    <property type="evidence" value="ECO:0000315"/>
    <property type="project" value="FlyBase"/>
</dbReference>
<dbReference type="GO" id="GO:0042802">
    <property type="term" value="F:identical protein binding"/>
    <property type="evidence" value="ECO:0000353"/>
    <property type="project" value="IntAct"/>
</dbReference>
<dbReference type="GO" id="GO:0048846">
    <property type="term" value="P:axon extension involved in axon guidance"/>
    <property type="evidence" value="ECO:0000315"/>
    <property type="project" value="FlyBase"/>
</dbReference>
<dbReference type="GO" id="GO:0007411">
    <property type="term" value="P:axon guidance"/>
    <property type="evidence" value="ECO:0000315"/>
    <property type="project" value="FlyBase"/>
</dbReference>
<dbReference type="GO" id="GO:0007413">
    <property type="term" value="P:axonal fasciculation"/>
    <property type="evidence" value="ECO:0000315"/>
    <property type="project" value="FlyBase"/>
</dbReference>
<dbReference type="GO" id="GO:0007155">
    <property type="term" value="P:cell adhesion"/>
    <property type="evidence" value="ECO:0007669"/>
    <property type="project" value="UniProtKB-KW"/>
</dbReference>
<dbReference type="GO" id="GO:0021551">
    <property type="term" value="P:central nervous system morphogenesis"/>
    <property type="evidence" value="ECO:0000315"/>
    <property type="project" value="FlyBase"/>
</dbReference>
<dbReference type="GO" id="GO:0070593">
    <property type="term" value="P:dendrite self-avoidance"/>
    <property type="evidence" value="ECO:0000314"/>
    <property type="project" value="FlyBase"/>
</dbReference>
<dbReference type="GO" id="GO:0050976">
    <property type="term" value="P:detection of mechanical stimulus involved in sensory perception of touch"/>
    <property type="evidence" value="ECO:0000316"/>
    <property type="project" value="FlyBase"/>
</dbReference>
<dbReference type="GO" id="GO:0032490">
    <property type="term" value="P:detection of molecule of bacterial origin"/>
    <property type="evidence" value="ECO:0000314"/>
    <property type="project" value="FlyBase"/>
</dbReference>
<dbReference type="GO" id="GO:0016319">
    <property type="term" value="P:mushroom body development"/>
    <property type="evidence" value="ECO:0000315"/>
    <property type="project" value="FlyBase"/>
</dbReference>
<dbReference type="GO" id="GO:0048666">
    <property type="term" value="P:neuron development"/>
    <property type="evidence" value="ECO:0000315"/>
    <property type="project" value="FlyBase"/>
</dbReference>
<dbReference type="GO" id="GO:0007422">
    <property type="term" value="P:peripheral nervous system development"/>
    <property type="evidence" value="ECO:0000315"/>
    <property type="project" value="FlyBase"/>
</dbReference>
<dbReference type="GO" id="GO:0006909">
    <property type="term" value="P:phagocytosis"/>
    <property type="evidence" value="ECO:0000315"/>
    <property type="project" value="FlyBase"/>
</dbReference>
<dbReference type="GO" id="GO:0050770">
    <property type="term" value="P:regulation of axonogenesis"/>
    <property type="evidence" value="ECO:0000315"/>
    <property type="project" value="FlyBase"/>
</dbReference>
<dbReference type="GO" id="GO:0048814">
    <property type="term" value="P:regulation of dendrite morphogenesis"/>
    <property type="evidence" value="ECO:0000315"/>
    <property type="project" value="FlyBase"/>
</dbReference>
<dbReference type="GO" id="GO:0007419">
    <property type="term" value="P:ventral cord development"/>
    <property type="evidence" value="ECO:0000316"/>
    <property type="project" value="FlyBase"/>
</dbReference>
<dbReference type="CDD" id="cd00063">
    <property type="entry name" value="FN3"/>
    <property type="match status" value="6"/>
</dbReference>
<dbReference type="CDD" id="cd20957">
    <property type="entry name" value="IgC2_3_Dscam"/>
    <property type="match status" value="1"/>
</dbReference>
<dbReference type="CDD" id="cd20955">
    <property type="entry name" value="IgI_1_Dscam"/>
    <property type="match status" value="1"/>
</dbReference>
<dbReference type="CDD" id="cd20953">
    <property type="entry name" value="IgI_2_Dscam"/>
    <property type="match status" value="1"/>
</dbReference>
<dbReference type="CDD" id="cd20956">
    <property type="entry name" value="IgI_4_Dscam"/>
    <property type="match status" value="1"/>
</dbReference>
<dbReference type="CDD" id="cd20958">
    <property type="entry name" value="IgI_5_Dscam"/>
    <property type="match status" value="1"/>
</dbReference>
<dbReference type="CDD" id="cd20954">
    <property type="entry name" value="IgI_7_Dscam"/>
    <property type="match status" value="1"/>
</dbReference>
<dbReference type="FunFam" id="2.60.40.10:FF:000017">
    <property type="entry name" value="Down syndrome cell adhesion molecule b"/>
    <property type="match status" value="2"/>
</dbReference>
<dbReference type="FunFam" id="2.60.40.10:FF:000093">
    <property type="entry name" value="Down syndrome cell adhesion molecule, isoform B"/>
    <property type="match status" value="1"/>
</dbReference>
<dbReference type="FunFam" id="2.60.40.10:FF:000230">
    <property type="entry name" value="Down syndrome cell adhesion molecule, isoform D"/>
    <property type="match status" value="1"/>
</dbReference>
<dbReference type="FunFam" id="2.60.40.10:FF:000302">
    <property type="entry name" value="Down syndrome cell adhesion molecule, isoform D"/>
    <property type="match status" value="1"/>
</dbReference>
<dbReference type="FunFam" id="2.60.40.10:FF:000308">
    <property type="entry name" value="Down syndrome cell adhesion molecule, isoform D"/>
    <property type="match status" value="1"/>
</dbReference>
<dbReference type="FunFam" id="2.60.40.10:FF:000310">
    <property type="entry name" value="Down syndrome cell adhesion molecule, isoform D"/>
    <property type="match status" value="1"/>
</dbReference>
<dbReference type="FunFam" id="2.60.40.10:FF:000311">
    <property type="entry name" value="Down syndrome cell adhesion molecule, isoform D"/>
    <property type="match status" value="1"/>
</dbReference>
<dbReference type="FunFam" id="2.60.40.10:FF:000324">
    <property type="entry name" value="Down syndrome cell adhesion molecule, isoform D"/>
    <property type="match status" value="1"/>
</dbReference>
<dbReference type="FunFam" id="2.60.40.10:FF:000413">
    <property type="entry name" value="Down syndrome cell adhesion molecule, isoform F"/>
    <property type="match status" value="1"/>
</dbReference>
<dbReference type="FunFam" id="2.60.40.10:FF:000410">
    <property type="entry name" value="Down syndrome cell adhesion molecule, isoform H"/>
    <property type="match status" value="1"/>
</dbReference>
<dbReference type="FunFam" id="2.60.40.10:FF:000394">
    <property type="entry name" value="Down syndrome cell adhesion molecule, isoform J"/>
    <property type="match status" value="1"/>
</dbReference>
<dbReference type="FunFam" id="2.60.40.10:FF:000426">
    <property type="entry name" value="Down syndrome cell adhesion molecule, isoform J"/>
    <property type="match status" value="1"/>
</dbReference>
<dbReference type="FunFam" id="2.60.40.10:FF:000435">
    <property type="entry name" value="Down syndrome cell adhesion molecule, isoform J"/>
    <property type="match status" value="1"/>
</dbReference>
<dbReference type="FunFam" id="2.60.40.10:FF:000439">
    <property type="entry name" value="Down syndrome cell adhesion molecule, isoform J"/>
    <property type="match status" value="1"/>
</dbReference>
<dbReference type="FunFam" id="2.60.40.10:FF:000498">
    <property type="entry name" value="Down syndrome cell adhesion molecule, isoform J"/>
    <property type="match status" value="1"/>
</dbReference>
<dbReference type="Gene3D" id="2.60.40.10">
    <property type="entry name" value="Immunoglobulins"/>
    <property type="match status" value="16"/>
</dbReference>
<dbReference type="InterPro" id="IPR056754">
    <property type="entry name" value="DSCAM/DSCAML_C"/>
</dbReference>
<dbReference type="InterPro" id="IPR021012">
    <property type="entry name" value="Dscam1_C"/>
</dbReference>
<dbReference type="InterPro" id="IPR003961">
    <property type="entry name" value="FN3_dom"/>
</dbReference>
<dbReference type="InterPro" id="IPR036116">
    <property type="entry name" value="FN3_sf"/>
</dbReference>
<dbReference type="InterPro" id="IPR007110">
    <property type="entry name" value="Ig-like_dom"/>
</dbReference>
<dbReference type="InterPro" id="IPR036179">
    <property type="entry name" value="Ig-like_dom_sf"/>
</dbReference>
<dbReference type="InterPro" id="IPR013783">
    <property type="entry name" value="Ig-like_fold"/>
</dbReference>
<dbReference type="InterPro" id="IPR013098">
    <property type="entry name" value="Ig_I-set"/>
</dbReference>
<dbReference type="InterPro" id="IPR003599">
    <property type="entry name" value="Ig_sub"/>
</dbReference>
<dbReference type="InterPro" id="IPR003598">
    <property type="entry name" value="Ig_sub2"/>
</dbReference>
<dbReference type="PANTHER" id="PTHR10075">
    <property type="entry name" value="BASIGIN RELATED"/>
    <property type="match status" value="1"/>
</dbReference>
<dbReference type="PANTHER" id="PTHR10075:SF14">
    <property type="entry name" value="CELL ADHESION MOLECULE DSCAM2-RELATED"/>
    <property type="match status" value="1"/>
</dbReference>
<dbReference type="Pfam" id="PF12355">
    <property type="entry name" value="Dscam_C"/>
    <property type="match status" value="1"/>
</dbReference>
<dbReference type="Pfam" id="PF00041">
    <property type="entry name" value="fn3"/>
    <property type="match status" value="5"/>
</dbReference>
<dbReference type="Pfam" id="PF25059">
    <property type="entry name" value="FN3_DSCAM-DSCAML_C"/>
    <property type="match status" value="1"/>
</dbReference>
<dbReference type="Pfam" id="PF07679">
    <property type="entry name" value="I-set"/>
    <property type="match status" value="4"/>
</dbReference>
<dbReference type="Pfam" id="PF13927">
    <property type="entry name" value="Ig_3"/>
    <property type="match status" value="4"/>
</dbReference>
<dbReference type="SMART" id="SM00060">
    <property type="entry name" value="FN3"/>
    <property type="match status" value="6"/>
</dbReference>
<dbReference type="SMART" id="SM00409">
    <property type="entry name" value="IG"/>
    <property type="match status" value="10"/>
</dbReference>
<dbReference type="SMART" id="SM00408">
    <property type="entry name" value="IGc2"/>
    <property type="match status" value="9"/>
</dbReference>
<dbReference type="SUPFAM" id="SSF49265">
    <property type="entry name" value="Fibronectin type III"/>
    <property type="match status" value="3"/>
</dbReference>
<dbReference type="SUPFAM" id="SSF48726">
    <property type="entry name" value="Immunoglobulin"/>
    <property type="match status" value="10"/>
</dbReference>
<dbReference type="PROSITE" id="PS50853">
    <property type="entry name" value="FN3"/>
    <property type="match status" value="6"/>
</dbReference>
<dbReference type="PROSITE" id="PS50835">
    <property type="entry name" value="IG_LIKE"/>
    <property type="match status" value="10"/>
</dbReference>